<feature type="chain" id="PRO_0000223940" description="Folliculin">
    <location>
        <begin position="1"/>
        <end position="579"/>
    </location>
</feature>
<feature type="domain" description="uDENN FLCN/SMCR8-type" evidence="3">
    <location>
        <begin position="86"/>
        <end position="242"/>
    </location>
</feature>
<feature type="domain" description="cDENN FLCN/SMCR8-type" evidence="3">
    <location>
        <begin position="339"/>
        <end position="491"/>
    </location>
</feature>
<feature type="domain" description="dDENN FLCN/SMCR8-type" evidence="3">
    <location>
        <begin position="493"/>
        <end position="558"/>
    </location>
</feature>
<feature type="region of interest" description="Disordered" evidence="4">
    <location>
        <begin position="30"/>
        <end position="81"/>
    </location>
</feature>
<feature type="region of interest" description="Essential for interaction with LDHA" evidence="43">
    <location>
        <begin position="210"/>
        <end position="220"/>
    </location>
</feature>
<feature type="region of interest" description="Disordered" evidence="4">
    <location>
        <begin position="294"/>
        <end position="337"/>
    </location>
</feature>
<feature type="coiled-coil region" evidence="2">
    <location>
        <begin position="287"/>
        <end position="310"/>
    </location>
</feature>
<feature type="compositionally biased region" description="Acidic residues" evidence="4">
    <location>
        <begin position="294"/>
        <end position="308"/>
    </location>
</feature>
<feature type="compositionally biased region" description="Polar residues" evidence="4">
    <location>
        <begin position="326"/>
        <end position="336"/>
    </location>
</feature>
<feature type="site" description="Essential for GTPase activation (GAP) activity" evidence="40 41">
    <location>
        <position position="164"/>
    </location>
</feature>
<feature type="modified residue" description="Phosphoserine" evidence="56 57 58">
    <location>
        <position position="62"/>
    </location>
</feature>
<feature type="modified residue" description="Phosphoserine" evidence="58">
    <location>
        <position position="73"/>
    </location>
</feature>
<feature type="modified residue" description="Phosphoserine" evidence="58">
    <location>
        <position position="302"/>
    </location>
</feature>
<feature type="modified residue" description="Phosphoserine; by ULK1" evidence="29">
    <location>
        <position position="406"/>
    </location>
</feature>
<feature type="modified residue" description="Phosphoserine; by ULK1" evidence="29">
    <location>
        <position position="537"/>
    </location>
</feature>
<feature type="modified residue" description="Phosphoserine; by ULK1" evidence="29">
    <location>
        <position position="542"/>
    </location>
</feature>
<feature type="modified residue" description="Phosphoserine" evidence="58">
    <location>
        <position position="571"/>
    </location>
</feature>
<feature type="splice variant" id="VSP_017312" description="In isoform 3." evidence="47">
    <original>CPGREGPIFFGDEQHGFVFSHTFFIKDSLARGFQRWYSIITIMMDRIYLINSWPFLLGKVRGII</original>
    <variation>SLVATEPVSVGAHMLPGALGGLGASIAQGGRHWSSLRADPQISTAQGTGRLPCPELREESCWTC</variation>
    <location>
        <begin position="134"/>
        <end position="197"/>
    </location>
</feature>
<feature type="splice variant" id="VSP_017313" description="In isoform 3." evidence="47">
    <location>
        <begin position="198"/>
        <end position="579"/>
    </location>
</feature>
<feature type="splice variant" id="VSP_017314" description="In isoform 2." evidence="48">
    <original>DLEEESESWDNSEAEEEEKAPVLPESTEGRELTQGPAESSSLSGCGSWQPRK</original>
    <variation>GEAGVLLPGPWPGWPWGGTSCLLSWQESLREGNAALNQPRTSLREAHPPISV</variation>
    <location>
        <begin position="291"/>
        <end position="342"/>
    </location>
</feature>
<feature type="splice variant" id="VSP_017315" description="In isoform 2." evidence="48">
    <location>
        <begin position="343"/>
        <end position="579"/>
    </location>
</feature>
<feature type="sequence variant" id="VAR_025356" description="In a sporadic colorectal carcinoma; somatic mutation; dbSNP:rs137852930." evidence="6">
    <original>S</original>
    <variation>W</variation>
    <location>
        <position position="79"/>
    </location>
</feature>
<feature type="sequence variant" id="VAR_066023" description="In BHD1; dbSNP:rs2145012002." evidence="20">
    <original>S</original>
    <variation>I</variation>
    <location>
        <position position="108"/>
    </location>
</feature>
<feature type="sequence variant" id="VAR_066024" description="In PSP; dbSNP:rs2145009956." evidence="16">
    <original>E</original>
    <variation>K</variation>
    <location>
        <position position="132"/>
    </location>
</feature>
<feature type="sequence variant" id="VAR_066025" description="In PSP and BHD1; impaired protein stability; dbSNP:rs786203218." evidence="15 22 38">
    <location>
        <position position="157"/>
    </location>
</feature>
<feature type="sequence variant" id="VAR_083268" description="In PSP." evidence="34">
    <location>
        <begin position="170"/>
        <end position="579"/>
    </location>
</feature>
<feature type="sequence variant" id="VAR_083269" description="In BHD1." evidence="38">
    <location>
        <begin position="220"/>
        <end position="579"/>
    </location>
</feature>
<feature type="sequence variant" id="VAR_025357" description="In a renal cell carcinoma cell line." evidence="7">
    <original>A</original>
    <variation>V</variation>
    <location>
        <position position="238"/>
    </location>
</feature>
<feature type="sequence variant" id="VAR_066026" description="In RCC; impaired protein stability; dbSNP:rs78683075." evidence="18 22">
    <original>R</original>
    <variation>C</variation>
    <location>
        <position position="239"/>
    </location>
</feature>
<feature type="sequence variant" id="VAR_083270" description="In PSP." evidence="9">
    <location>
        <begin position="315"/>
        <end position="579"/>
    </location>
</feature>
<feature type="sequence variant" id="VAR_025358" description="In a primary colorectal cancer; dbSNP:rs143483053." evidence="7">
    <original>R</original>
    <variation>Q</variation>
    <location>
        <position position="320"/>
    </location>
</feature>
<feature type="sequence variant" id="VAR_083271" description="In BHD1." evidence="38">
    <location>
        <begin position="339"/>
        <end position="579"/>
    </location>
</feature>
<feature type="sequence variant" id="VAR_066027" description="Found in a colorectal cell line; impaired protein stability; dbSNP:rs557336321." evidence="22">
    <original>R</original>
    <variation>C</variation>
    <location>
        <position position="362"/>
    </location>
</feature>
<feature type="sequence variant" id="VAR_025359" description="In a primary colorectal cancer; somatic mutation; dbSNP:rs1060502374." evidence="7">
    <original>R</original>
    <variation>G</variation>
    <location>
        <position position="392"/>
    </location>
</feature>
<feature type="sequence variant" id="VAR_083272" description="In BHD1." evidence="38">
    <location>
        <begin position="409"/>
        <end position="579"/>
    </location>
</feature>
<feature type="sequence variant" id="VAR_083273" description="In PSP." evidence="39">
    <location>
        <begin position="425"/>
        <end position="579"/>
    </location>
</feature>
<feature type="sequence variant" id="VAR_066028" description="In PSP; dbSNP:rs375082054." evidence="15">
    <original>H</original>
    <variation>Y</variation>
    <location>
        <position position="429"/>
    </location>
</feature>
<feature type="sequence variant" id="VAR_025360" description="In a primary clear-cell renal cell carcinoma; somatic mutation." evidence="7">
    <original>A</original>
    <variation>S</variation>
    <location>
        <position position="444"/>
    </location>
</feature>
<feature type="sequence variant" id="VAR_025361" description="In a sporadic colorectal carcinoma; somatic mutation; dbSNP:rs41419545." evidence="6">
    <original>A</original>
    <variation>T</variation>
    <location>
        <position position="445"/>
    </location>
</feature>
<feature type="sequence variant" id="VAR_083274" description="In PSP." evidence="9">
    <location>
        <begin position="477"/>
        <end position="579"/>
    </location>
</feature>
<feature type="sequence variant" id="VAR_066029" description="In BHD1; does not impair protein stability, growth suppression activity or intracellular localization of folliculin; dbSNP:rs199643834." evidence="13 22">
    <original>K</original>
    <variation>R</variation>
    <location>
        <position position="508"/>
    </location>
</feature>
<feature type="sequence variant" id="VAR_083275" description="In BHD1." evidence="38">
    <location>
        <begin position="511"/>
        <end position="579"/>
    </location>
</feature>
<feature type="sequence variant" id="VAR_083276" description="In BHD1." evidence="38">
    <location>
        <begin position="533"/>
        <end position="579"/>
    </location>
</feature>
<feature type="mutagenesis site" description="Abolished GTPase activation (GAP) activity." evidence="44">
    <original>F</original>
    <variation>D</variation>
    <location>
        <position position="10"/>
    </location>
</feature>
<feature type="mutagenesis site" description="Does not assemble into a stable folliculin complex (LFC), preventing localization to the lysosomal membrane upon amino acid starvation." evidence="40">
    <original>F</original>
    <variation>D</variation>
    <location>
        <position position="118"/>
    </location>
</feature>
<feature type="mutagenesis site" description="Abolished GTPase activation (GAP) activity." evidence="40 41">
    <original>R</original>
    <variation>A</variation>
    <location>
        <position position="164"/>
    </location>
</feature>
<feature type="mutagenesis site" description="Impaired ability to regulate autophagy; when associated with A-537 and A-542." evidence="29">
    <original>S</original>
    <variation>A</variation>
    <location>
        <position position="406"/>
    </location>
</feature>
<feature type="mutagenesis site" description="Impaired ability to regulate autophagy; when associated with A-406 and A-542." evidence="29">
    <original>S</original>
    <variation>A</variation>
    <location>
        <position position="537"/>
    </location>
</feature>
<feature type="mutagenesis site" description="Impaired ability to regulate autophagy; when associated with A-406 and A-537." evidence="29">
    <original>S</original>
    <variation>A</variation>
    <location>
        <position position="542"/>
    </location>
</feature>
<feature type="strand" evidence="60">
    <location>
        <begin position="4"/>
        <end position="10"/>
    </location>
</feature>
<feature type="strand" evidence="60">
    <location>
        <begin position="12"/>
        <end position="14"/>
    </location>
</feature>
<feature type="strand" evidence="60">
    <location>
        <begin position="16"/>
        <end position="22"/>
    </location>
</feature>
<feature type="strand" evidence="60">
    <location>
        <begin position="95"/>
        <end position="98"/>
    </location>
</feature>
<feature type="turn" evidence="60">
    <location>
        <begin position="100"/>
        <end position="102"/>
    </location>
</feature>
<feature type="strand" evidence="60">
    <location>
        <begin position="105"/>
        <end position="108"/>
    </location>
</feature>
<feature type="helix" evidence="60">
    <location>
        <begin position="115"/>
        <end position="129"/>
    </location>
</feature>
<feature type="strand" evidence="60">
    <location>
        <begin position="135"/>
        <end position="137"/>
    </location>
</feature>
<feature type="strand" evidence="60">
    <location>
        <begin position="139"/>
        <end position="144"/>
    </location>
</feature>
<feature type="strand" evidence="60">
    <location>
        <begin position="150"/>
        <end position="159"/>
    </location>
</feature>
<feature type="strand" evidence="60">
    <location>
        <begin position="161"/>
        <end position="177"/>
    </location>
</feature>
<feature type="helix" evidence="60">
    <location>
        <begin position="179"/>
        <end position="183"/>
    </location>
</feature>
<feature type="helix" evidence="60">
    <location>
        <begin position="186"/>
        <end position="214"/>
    </location>
</feature>
<feature type="strand" evidence="60">
    <location>
        <begin position="243"/>
        <end position="245"/>
    </location>
</feature>
<feature type="helix" evidence="60">
    <location>
        <begin position="250"/>
        <end position="266"/>
    </location>
</feature>
<feature type="strand" evidence="60">
    <location>
        <begin position="267"/>
        <end position="269"/>
    </location>
</feature>
<feature type="helix" evidence="60">
    <location>
        <begin position="283"/>
        <end position="290"/>
    </location>
</feature>
<feature type="strand" evidence="60">
    <location>
        <begin position="340"/>
        <end position="343"/>
    </location>
</feature>
<feature type="helix" evidence="59">
    <location>
        <begin position="349"/>
        <end position="356"/>
    </location>
</feature>
<feature type="helix" evidence="59">
    <location>
        <begin position="358"/>
        <end position="370"/>
    </location>
</feature>
<feature type="strand" evidence="59">
    <location>
        <begin position="373"/>
        <end position="377"/>
    </location>
</feature>
<feature type="helix" evidence="59">
    <location>
        <begin position="381"/>
        <end position="391"/>
    </location>
</feature>
<feature type="helix" evidence="59">
    <location>
        <begin position="392"/>
        <end position="394"/>
    </location>
</feature>
<feature type="helix" evidence="59">
    <location>
        <begin position="397"/>
        <end position="399"/>
    </location>
</feature>
<feature type="strand" evidence="59">
    <location>
        <begin position="402"/>
        <end position="408"/>
    </location>
</feature>
<feature type="turn" evidence="59">
    <location>
        <begin position="412"/>
        <end position="414"/>
    </location>
</feature>
<feature type="strand" evidence="59">
    <location>
        <begin position="416"/>
        <end position="420"/>
    </location>
</feature>
<feature type="helix" evidence="59">
    <location>
        <begin position="428"/>
        <end position="431"/>
    </location>
</feature>
<feature type="strand" evidence="59">
    <location>
        <begin position="436"/>
        <end position="443"/>
    </location>
</feature>
<feature type="strand" evidence="59">
    <location>
        <begin position="463"/>
        <end position="469"/>
    </location>
</feature>
<feature type="turn" evidence="59">
    <location>
        <begin position="473"/>
        <end position="476"/>
    </location>
</feature>
<feature type="helix" evidence="59">
    <location>
        <begin position="481"/>
        <end position="491"/>
    </location>
</feature>
<feature type="strand" evidence="60">
    <location>
        <begin position="493"/>
        <end position="495"/>
    </location>
</feature>
<feature type="helix" evidence="59">
    <location>
        <begin position="497"/>
        <end position="521"/>
    </location>
</feature>
<feature type="helix" evidence="59">
    <location>
        <begin position="530"/>
        <end position="538"/>
    </location>
</feature>
<feature type="helix" evidence="59">
    <location>
        <begin position="544"/>
        <end position="553"/>
    </location>
</feature>
<feature type="helix" evidence="59">
    <location>
        <begin position="554"/>
        <end position="556"/>
    </location>
</feature>
<feature type="helix" evidence="60">
    <location>
        <begin position="559"/>
        <end position="567"/>
    </location>
</feature>
<accession>Q8NFG4</accession>
<accession>A6NJJ8</accession>
<accession>Q6ZRX1</accession>
<accession>Q96BD2</accession>
<accession>Q96BE4</accession>
<comment type="function">
    <text evidence="1 11 17 21 26 27 28 29 31 32 36 37 40 41 42 43 44 45">Multi-functional protein, involved in both the cellular response to amino acid availability and in the regulation of glycolysis (PubMed:17028174, PubMed:18663353, PubMed:21209915, PubMed:24081491, PubMed:24095279, PubMed:31672913, PubMed:31704029, PubMed:32612235, PubMed:34381247, PubMed:36103527, PubMed:37079666). GTPase-activating protein that plays a key role in the cellular response to amino acid availability through regulation of the non-canonical mTORC1 signaling cascade controlling the MiT/TFE factors TFEB and TFE3 (PubMed:17028174, PubMed:18663353, PubMed:21209915, PubMed:24081491, PubMed:24095279, PubMed:24448649, PubMed:31672913, PubMed:31704029, PubMed:32612235, PubMed:36103527, PubMed:37079666). Activates mTORC1 by acting as a GTPase-activating protein: specifically stimulates GTP hydrolysis by RagC/RRAGC or RagD/RRAGD, promoting the conversion to the GDP-bound state of RagC/RRAGC or RagD/RRAGD, and thereby activating the kinase activity of mTORC1 (PubMed:24095279, PubMed:31672913, PubMed:31704029, PubMed:32612235, PubMed:37079666). The GTPase-activating activity is inhibited during starvation and activated in presence of nutrients (PubMed:31672913, PubMed:32612235). Acts as a key component for non-canonical mTORC1-dependent control of the MiT/TFE factors TFEB and TFE3, while it is not involved in mTORC1-dependent phosphorylation of canonical RPS6KB1/S6K1 and EIF4EBP1/4E-BP1 (PubMed:21209915, PubMed:24081491, PubMed:31672913, PubMed:32612235). In low-amino acid conditions, the lysosomal folliculin complex (LFC) is formed on the membrane of lysosomes, which inhibits the GTPase-activating activity of FLCN, inactivates mTORC1 and maximizes nuclear translocation of TFEB and TFE3 (PubMed:31672913). Upon amino acid restimulation, RagA/RRAGA (or RagB/RRAGB) nucleotide exchange promotes disassembly of the LFC complex and liberates the GTPase-activating activity of FLCN, leading to activation of mTORC1 and subsequent cytoplasmic retention of TFEB and TFE3 (PubMed:31672913). Indirectly acts as a positive regulator of Wnt signaling by promoting mTOR-dependent cytoplasmic retention of MiT/TFE factor TFE3 (PubMed:31272105). Required for the exit of hematopoietic stem cell from pluripotency by promoting mTOR-dependent cytoplasmic retention of TFE3, thereby increasing Wnt signaling (PubMed:30733432). Acts as an inhibitor of browning of adipose tissue by regulating mTOR-dependent cytoplasmic retention of TFE3 (By similarity). Involved in the control of embryonic stem cells differentiation; together with LAMTOR1 it is necessary to recruit and activate RagC/RRAGC and RagD/RRAGD at the lysosomes, and to induce exit of embryonic stem cells from pluripotency via non-canonical, mTOR-independent TFE3 inactivation (By similarity). In response to flow stress, regulates STK11/LKB1 accumulation and mTORC1 activation through primary cilia: may act by recruiting STK11/LKB1 to primary cilia for activation of AMPK resided at basal bodies, causing mTORC1 down-regulation (PubMed:27072130). Together with FNIP1 and/or FNIP2, regulates autophagy: following phosphorylation by ULK1, interacts with GABARAP and promotes autophagy (PubMed:25126726). Required for starvation-induced perinuclear clustering of lysosomes by promoting association of RILP with its effector RAB34 (PubMed:27113757). Regulates glycolysis by binding to lactate dehydrogenase LDHA, acting as an uncompetitive inhibitor (PubMed:34381247).</text>
</comment>
<comment type="activity regulation">
    <text evidence="40">GTPase-activating activity is inhibited in the folliculin complex (LFC), which stabilizes the GDP-bound state of RagA/RRAGA (or RagB/RRAGB), because Arg-164 is located far from the RagC/RRAGC or RagD/RRAGD nucleotide pocket (PubMed:31672913). Disassembly of the LFC complex upon amino acid restimulation liberates the GTPase-activating activity (PubMed:31672913).</text>
</comment>
<comment type="subunit">
    <text evidence="11 14 17 29 31 32 33 40 41 43 44">Interacts (via C-terminus) with FNIP1 or FNIP2 (via C-terminus) (PubMed:17028174, PubMed:18403135, PubMed:18663353, PubMed:27353360, PubMed:36103527). Component of the lysosomal folliculin complex (LFC), composed of FLCN, FNIP1 (or FNIP2), RagA/RRAGA or RagB/RRAGB GDP-bound, RagC/RRAGC or RagD/RRAGD GTP-bound, and Ragulator (PubMed:31672913, PubMed:31704029, PubMed:36103527). Interaction with FNIP1 or FNIP2 mediates indirect interaction with the PRKAA1, PRKAB1 and PRKAG1 subunits of 5'-AMP-activated protein kinase (AMPK) (PubMed:17028174). Interacts with HSP90AA1 in the presence of FNIP1 (PubMed:27353360). Interacts with HSP70, STUB1, CDC37, AHSA1, CCT2, STIP1, PTGES3 and PPP5C (PubMed:27353360). Interacts with GABARAP; interaction takes place in the presence of FNIP1 and/or FNIP2 (PubMed:25126726). Interacts with RILP; the interaction is direct and promotes association between RILP and RAB34 (PubMed:27113757). Interacts with KIF3A and KIF3B (PubMed:27072130). Interacts with lactate dehydrogenase LDHA, but not LDHB; the interaction is direct, may preferentially bind LDHA dimers rather than tetramers, and regulates LDHA activity, acting as an uncompetitive inhibitor (PubMed:34381247).</text>
</comment>
<comment type="interaction">
    <interactant intactId="EBI-2970160">
        <id>Q8NFG4</id>
    </interactant>
    <interactant intactId="EBI-2946919">
        <id>Q8TF40</id>
        <label>FNIP1</label>
    </interactant>
    <organismsDiffer>false</organismsDiffer>
    <experiments>5</experiments>
</comment>
<comment type="interaction">
    <interactant intactId="EBI-2970160">
        <id>Q8NFG4</id>
    </interactant>
    <interactant intactId="EBI-7597109">
        <id>Q9P278</id>
        <label>FNIP2</label>
    </interactant>
    <organismsDiffer>false</organismsDiffer>
    <experiments>7</experiments>
</comment>
<comment type="interaction">
    <interactant intactId="EBI-15604776">
        <id>Q8NFG4-1</id>
    </interactant>
    <interactant intactId="EBI-15604805">
        <id>Q8TF40-1</id>
        <label>FNIP1</label>
    </interactant>
    <organismsDiffer>false</organismsDiffer>
    <experiments>7</experiments>
</comment>
<comment type="subcellular location">
    <subcellularLocation>
        <location evidence="26 27 32 35 40">Lysosome membrane</location>
    </subcellularLocation>
    <subcellularLocation>
        <location evidence="11 17 26 27 35 40">Cytoplasm</location>
        <location evidence="11 17 26 27 35 40">Cytosol</location>
    </subcellularLocation>
    <subcellularLocation>
        <location evidence="24 31">Cell projection</location>
        <location evidence="24 31">Cilium</location>
    </subcellularLocation>
    <subcellularLocation>
        <location evidence="24">Cytoplasm</location>
        <location evidence="24">Cytoskeleton</location>
        <location evidence="24">Microtubule organizing center</location>
        <location evidence="24">Centrosome</location>
    </subcellularLocation>
    <subcellularLocation>
        <location evidence="24">Cytoplasm</location>
        <location evidence="24">Cytoskeleton</location>
        <location evidence="24">Spindle</location>
    </subcellularLocation>
    <subcellularLocation>
        <location evidence="11 17">Nucleus</location>
    </subcellularLocation>
    <text evidence="11 17 24 27 35 40">Localizes to lysosome membrane in amino acid-depleted conditions and relocalizes to the cytosol upon refeeding (PubMed:24095279, PubMed:29848618, PubMed:31672913). Colocalizes with FNIP1 and FNIP2 in the cytoplasm (PubMed:17028174, PubMed:18663353). Also localizes to motile and non-motile cilia, centrosomes and the mitotic spindle (PubMed:23784378).</text>
</comment>
<comment type="alternative products">
    <event type="alternative splicing"/>
    <isoform>
        <id>Q8NFG4-1</id>
        <name>1</name>
        <sequence type="displayed"/>
    </isoform>
    <isoform>
        <id>Q8NFG4-2</id>
        <name>2</name>
        <sequence type="described" ref="VSP_017314 VSP_017315"/>
    </isoform>
    <isoform>
        <id>Q8NFG4-3</id>
        <name>3</name>
        <sequence type="described" ref="VSP_017312 VSP_017313"/>
    </isoform>
</comment>
<comment type="tissue specificity">
    <text evidence="5">Expressed in most tissues tested, including skin, lung, kidney, heart, testis and stomach.</text>
</comment>
<comment type="developmental stage">
    <text evidence="5">Expressed in fetal lung, kidney, liver, and brain.</text>
</comment>
<comment type="PTM">
    <text evidence="29">Phosphorylation by ULK1 modulates the interaction with GABARAP and is required to regulate autophagy.</text>
</comment>
<comment type="disease" evidence="5 10 13 20 24 38">
    <disease id="DI-00190">
        <name>Birt-Hogg-Dube syndrome 1</name>
        <acronym>BHD1</acronym>
        <description>A form of Birt-Hogg-Dube syndrome, a rare genodermatosis usually manifesting in adulthood and characterized by multiple fibrofolliculomas, trichodiscomas, and acrochordons. Patients with this syndrome have an increased susceptibility to develop renal cell carcinoma, lung cysts, and spontaneous pneumothorax. Inheritance is autosomal dominant.</description>
        <dbReference type="MIM" id="135150"/>
    </disease>
    <text>The disease is caused by variants affecting the gene represented in this entry.</text>
</comment>
<comment type="disease" evidence="8 9 12 15 16 19 30 34 39">
    <disease id="DI-02208">
        <name>Primary spontaneous pneumothorax</name>
        <acronym>PSP</acronym>
        <description>Condition in which air is present in the pleural space in the absence of a precipitating event, such as trauma or lung disease. This results in secondary collapse of the lung, either partially or completely, and some degree of hypoxia. PSP is relatively common, with an incidence between 7.4-18/100'000 for men and 1.2-6/100'000 for women and a dose-dependent, increased risk among smokers. Most cases are sporadic, typically occurring in tall, thin men aged 10-30 years and generally while at rest. Familial PSP is rarer and usually is inherited as an autosomal dominant condition with reduced penetrance, although X-linked recessive and autosomal recessive inheritance have also been suggested.</description>
        <dbReference type="MIM" id="173600"/>
    </disease>
    <text>The disease is caused by variants affecting the gene represented in this entry.</text>
</comment>
<comment type="disease" evidence="18 25">
    <disease id="DI-02254">
        <name>Renal cell carcinoma</name>
        <acronym>RCC</acronym>
        <description>Renal cell carcinoma is a heterogeneous group of sporadic or hereditary carcinoma derived from cells of the proximal renal tubular epithelium. It is subclassified into clear cell renal carcinoma (non-papillary carcinoma), papillary renal cell carcinoma, chromophobe renal cell carcinoma, collecting duct carcinoma with medullary carcinoma of the kidney, and unclassified renal cell carcinoma. Clear cell renal cell carcinoma is the most common subtype.</description>
        <dbReference type="MIM" id="144700"/>
    </disease>
    <text>The gene represented in this entry may be involved in disease pathogenesis.</text>
</comment>
<comment type="similarity">
    <text evidence="50">Belongs to the folliculin family.</text>
</comment>
<comment type="caution">
    <text evidence="23 27">Based on its structure and in vitro assays, was initially thought to have guanine nucleotide exchange factor (GEF) activity (PubMed:22977732). However, subsequent studies showed that it does not act as GEF in vivo (PubMed:24095279).</text>
</comment>
<comment type="online information" name="Atlas of Genetics and Cytogenetics in Oncology and Haematology">
    <link uri="https://atlasgeneticsoncology.org/gene/789/FLCN"/>
</comment>
<comment type="online information" name="Leiden Open Variation Database">
    <link uri="https://databases.lovd.nl/shared/genes/FLCN"/>
    <text>Folliculin (FLCN)</text>
</comment>
<proteinExistence type="evidence at protein level"/>
<sequence>MNAIVALCHFCELHGPRTLFCTEVLHAPLPQGDGNEDSPGQGEQAEEEEGGIQMNSRMRAHSPAEGASVESSSPGPKKSDMCEGCRSLAAGHPGYISHDKETSIKYVSHQHPSHPQLFSIVRQACVRSLSCEVCPGREGPIFFGDEQHGFVFSHTFFIKDSLARGFQRWYSIITIMMDRIYLINSWPFLLGKVRGIIDELQGKALKVFEAEQFGCPQRAQRMNTAFTPFLHQRNGNAARSLTSLTSDDNLWACLHTSFAWLLKACGSRLTEKLLEGAPTEDTLVQMEKLADLEEESESWDNSEAEEEEKAPVLPESTEGRELTQGPAESSSLSGCGSWQPRKLPVFKSLRHMRQVLGAPSFRMLAWHVLMGNQVIWKSRDVDLVQSAFEVLRTMLPVGCVRIIPYSSQYEEAYRCNFLGLSPHVQIPPHVLSSEFAVIVEVHAAARSTLHPVGCEDDQSLSKYEFVVTSGSPVAADRVGPTILNKIEAALTNQNLSVDVVDQCLVCLKEEWMNKVKVLFKFTKVDSRPKEDTQKLLSILGASEEDNVKLLKFWMTGLSKTYKSHLMSTVRSPTASESRN</sequence>
<keyword id="KW-0002">3D-structure</keyword>
<keyword id="KW-0025">Alternative splicing</keyword>
<keyword id="KW-0966">Cell projection</keyword>
<keyword id="KW-0175">Coiled coil</keyword>
<keyword id="KW-0963">Cytoplasm</keyword>
<keyword id="KW-0206">Cytoskeleton</keyword>
<keyword id="KW-0225">Disease variant</keyword>
<keyword id="KW-0343">GTPase activation</keyword>
<keyword id="KW-0458">Lysosome</keyword>
<keyword id="KW-0472">Membrane</keyword>
<keyword id="KW-0539">Nucleus</keyword>
<keyword id="KW-0597">Phosphoprotein</keyword>
<keyword id="KW-1267">Proteomics identification</keyword>
<keyword id="KW-1185">Reference proteome</keyword>
<keyword id="KW-0043">Tumor suppressor</keyword>
<name>FLCN_HUMAN</name>
<reference key="1">
    <citation type="journal article" date="2002" name="Cancer Cell">
        <title>Mutations in a novel gene lead to kidney tumors, lung wall defects, and benign tumors of the hair follicle in patients with the Birt-Hogg-Dube syndrome.</title>
        <authorList>
            <person name="Nickerson M.L."/>
            <person name="Warren M.B."/>
            <person name="Toro J.R."/>
            <person name="Matrosova V."/>
            <person name="Glenn G."/>
            <person name="Turner M.L."/>
            <person name="Duray P."/>
            <person name="Merino M."/>
            <person name="Choyke P.L."/>
            <person name="Pavlovich C.P."/>
            <person name="Sharma N."/>
            <person name="Walther M.M."/>
            <person name="Munroe D."/>
            <person name="Hill R."/>
            <person name="Maher E."/>
            <person name="Greenberg C."/>
            <person name="Lerman M.I."/>
            <person name="Linehan W.M."/>
            <person name="Zbar B."/>
            <person name="Schmidt L.S."/>
        </authorList>
    </citation>
    <scope>NUCLEOTIDE SEQUENCE [MRNA] (ISOFORM 1)</scope>
    <scope>TISSUE SPECIFICITY</scope>
    <scope>DEVELOPMENTAL STAGE</scope>
    <scope>INVOLVEMENT IN BIRT-HOGG-DUBE SYNDROME</scope>
    <source>
        <tissue>Lung</tissue>
    </source>
</reference>
<reference key="2">
    <citation type="journal article" date="2004" name="Nat. Genet.">
        <title>Complete sequencing and characterization of 21,243 full-length human cDNAs.</title>
        <authorList>
            <person name="Ota T."/>
            <person name="Suzuki Y."/>
            <person name="Nishikawa T."/>
            <person name="Otsuki T."/>
            <person name="Sugiyama T."/>
            <person name="Irie R."/>
            <person name="Wakamatsu A."/>
            <person name="Hayashi K."/>
            <person name="Sato H."/>
            <person name="Nagai K."/>
            <person name="Kimura K."/>
            <person name="Makita H."/>
            <person name="Sekine M."/>
            <person name="Obayashi M."/>
            <person name="Nishi T."/>
            <person name="Shibahara T."/>
            <person name="Tanaka T."/>
            <person name="Ishii S."/>
            <person name="Yamamoto J."/>
            <person name="Saito K."/>
            <person name="Kawai Y."/>
            <person name="Isono Y."/>
            <person name="Nakamura Y."/>
            <person name="Nagahari K."/>
            <person name="Murakami K."/>
            <person name="Yasuda T."/>
            <person name="Iwayanagi T."/>
            <person name="Wagatsuma M."/>
            <person name="Shiratori A."/>
            <person name="Sudo H."/>
            <person name="Hosoiri T."/>
            <person name="Kaku Y."/>
            <person name="Kodaira H."/>
            <person name="Kondo H."/>
            <person name="Sugawara M."/>
            <person name="Takahashi M."/>
            <person name="Kanda K."/>
            <person name="Yokoi T."/>
            <person name="Furuya T."/>
            <person name="Kikkawa E."/>
            <person name="Omura Y."/>
            <person name="Abe K."/>
            <person name="Kamihara K."/>
            <person name="Katsuta N."/>
            <person name="Sato K."/>
            <person name="Tanikawa M."/>
            <person name="Yamazaki M."/>
            <person name="Ninomiya K."/>
            <person name="Ishibashi T."/>
            <person name="Yamashita H."/>
            <person name="Murakawa K."/>
            <person name="Fujimori K."/>
            <person name="Tanai H."/>
            <person name="Kimata M."/>
            <person name="Watanabe M."/>
            <person name="Hiraoka S."/>
            <person name="Chiba Y."/>
            <person name="Ishida S."/>
            <person name="Ono Y."/>
            <person name="Takiguchi S."/>
            <person name="Watanabe S."/>
            <person name="Yosida M."/>
            <person name="Hotuta T."/>
            <person name="Kusano J."/>
            <person name="Kanehori K."/>
            <person name="Takahashi-Fujii A."/>
            <person name="Hara H."/>
            <person name="Tanase T.-O."/>
            <person name="Nomura Y."/>
            <person name="Togiya S."/>
            <person name="Komai F."/>
            <person name="Hara R."/>
            <person name="Takeuchi K."/>
            <person name="Arita M."/>
            <person name="Imose N."/>
            <person name="Musashino K."/>
            <person name="Yuuki H."/>
            <person name="Oshima A."/>
            <person name="Sasaki N."/>
            <person name="Aotsuka S."/>
            <person name="Yoshikawa Y."/>
            <person name="Matsunawa H."/>
            <person name="Ichihara T."/>
            <person name="Shiohata N."/>
            <person name="Sano S."/>
            <person name="Moriya S."/>
            <person name="Momiyama H."/>
            <person name="Satoh N."/>
            <person name="Takami S."/>
            <person name="Terashima Y."/>
            <person name="Suzuki O."/>
            <person name="Nakagawa S."/>
            <person name="Senoh A."/>
            <person name="Mizoguchi H."/>
            <person name="Goto Y."/>
            <person name="Shimizu F."/>
            <person name="Wakebe H."/>
            <person name="Hishigaki H."/>
            <person name="Watanabe T."/>
            <person name="Sugiyama A."/>
            <person name="Takemoto M."/>
            <person name="Kawakami B."/>
            <person name="Yamazaki M."/>
            <person name="Watanabe K."/>
            <person name="Kumagai A."/>
            <person name="Itakura S."/>
            <person name="Fukuzumi Y."/>
            <person name="Fujimori Y."/>
            <person name="Komiyama M."/>
            <person name="Tashiro H."/>
            <person name="Tanigami A."/>
            <person name="Fujiwara T."/>
            <person name="Ono T."/>
            <person name="Yamada K."/>
            <person name="Fujii Y."/>
            <person name="Ozaki K."/>
            <person name="Hirao M."/>
            <person name="Ohmori Y."/>
            <person name="Kawabata A."/>
            <person name="Hikiji T."/>
            <person name="Kobatake N."/>
            <person name="Inagaki H."/>
            <person name="Ikema Y."/>
            <person name="Okamoto S."/>
            <person name="Okitani R."/>
            <person name="Kawakami T."/>
            <person name="Noguchi S."/>
            <person name="Itoh T."/>
            <person name="Shigeta K."/>
            <person name="Senba T."/>
            <person name="Matsumura K."/>
            <person name="Nakajima Y."/>
            <person name="Mizuno T."/>
            <person name="Morinaga M."/>
            <person name="Sasaki M."/>
            <person name="Togashi T."/>
            <person name="Oyama M."/>
            <person name="Hata H."/>
            <person name="Watanabe M."/>
            <person name="Komatsu T."/>
            <person name="Mizushima-Sugano J."/>
            <person name="Satoh T."/>
            <person name="Shirai Y."/>
            <person name="Takahashi Y."/>
            <person name="Nakagawa K."/>
            <person name="Okumura K."/>
            <person name="Nagase T."/>
            <person name="Nomura N."/>
            <person name="Kikuchi H."/>
            <person name="Masuho Y."/>
            <person name="Yamashita R."/>
            <person name="Nakai K."/>
            <person name="Yada T."/>
            <person name="Nakamura Y."/>
            <person name="Ohara O."/>
            <person name="Isogai T."/>
            <person name="Sugano S."/>
        </authorList>
    </citation>
    <scope>NUCLEOTIDE SEQUENCE [LARGE SCALE MRNA] (ISOFORM 3)</scope>
    <source>
        <tissue>Spleen</tissue>
    </source>
</reference>
<reference key="3">
    <citation type="journal article" date="2006" name="Nature">
        <title>DNA sequence of human chromosome 17 and analysis of rearrangement in the human lineage.</title>
        <authorList>
            <person name="Zody M.C."/>
            <person name="Garber M."/>
            <person name="Adams D.J."/>
            <person name="Sharpe T."/>
            <person name="Harrow J."/>
            <person name="Lupski J.R."/>
            <person name="Nicholson C."/>
            <person name="Searle S.M."/>
            <person name="Wilming L."/>
            <person name="Young S.K."/>
            <person name="Abouelleil A."/>
            <person name="Allen N.R."/>
            <person name="Bi W."/>
            <person name="Bloom T."/>
            <person name="Borowsky M.L."/>
            <person name="Bugalter B.E."/>
            <person name="Butler J."/>
            <person name="Chang J.L."/>
            <person name="Chen C.-K."/>
            <person name="Cook A."/>
            <person name="Corum B."/>
            <person name="Cuomo C.A."/>
            <person name="de Jong P.J."/>
            <person name="DeCaprio D."/>
            <person name="Dewar K."/>
            <person name="FitzGerald M."/>
            <person name="Gilbert J."/>
            <person name="Gibson R."/>
            <person name="Gnerre S."/>
            <person name="Goldstein S."/>
            <person name="Grafham D.V."/>
            <person name="Grocock R."/>
            <person name="Hafez N."/>
            <person name="Hagopian D.S."/>
            <person name="Hart E."/>
            <person name="Norman C.H."/>
            <person name="Humphray S."/>
            <person name="Jaffe D.B."/>
            <person name="Jones M."/>
            <person name="Kamal M."/>
            <person name="Khodiyar V.K."/>
            <person name="LaButti K."/>
            <person name="Laird G."/>
            <person name="Lehoczky J."/>
            <person name="Liu X."/>
            <person name="Lokyitsang T."/>
            <person name="Loveland J."/>
            <person name="Lui A."/>
            <person name="Macdonald P."/>
            <person name="Major J.E."/>
            <person name="Matthews L."/>
            <person name="Mauceli E."/>
            <person name="McCarroll S.A."/>
            <person name="Mihalev A.H."/>
            <person name="Mudge J."/>
            <person name="Nguyen C."/>
            <person name="Nicol R."/>
            <person name="O'Leary S.B."/>
            <person name="Osoegawa K."/>
            <person name="Schwartz D.C."/>
            <person name="Shaw-Smith C."/>
            <person name="Stankiewicz P."/>
            <person name="Steward C."/>
            <person name="Swarbreck D."/>
            <person name="Venkataraman V."/>
            <person name="Whittaker C.A."/>
            <person name="Yang X."/>
            <person name="Zimmer A.R."/>
            <person name="Bradley A."/>
            <person name="Hubbard T."/>
            <person name="Birren B.W."/>
            <person name="Rogers J."/>
            <person name="Lander E.S."/>
            <person name="Nusbaum C."/>
        </authorList>
    </citation>
    <scope>NUCLEOTIDE SEQUENCE [LARGE SCALE GENOMIC DNA]</scope>
</reference>
<reference key="4">
    <citation type="submission" date="2005-09" db="EMBL/GenBank/DDBJ databases">
        <authorList>
            <person name="Mural R.J."/>
            <person name="Istrail S."/>
            <person name="Sutton G.G."/>
            <person name="Florea L."/>
            <person name="Halpern A.L."/>
            <person name="Mobarry C.M."/>
            <person name="Lippert R."/>
            <person name="Walenz B."/>
            <person name="Shatkay H."/>
            <person name="Dew I."/>
            <person name="Miller J.R."/>
            <person name="Flanigan M.J."/>
            <person name="Edwards N.J."/>
            <person name="Bolanos R."/>
            <person name="Fasulo D."/>
            <person name="Halldorsson B.V."/>
            <person name="Hannenhalli S."/>
            <person name="Turner R."/>
            <person name="Yooseph S."/>
            <person name="Lu F."/>
            <person name="Nusskern D.R."/>
            <person name="Shue B.C."/>
            <person name="Zheng X.H."/>
            <person name="Zhong F."/>
            <person name="Delcher A.L."/>
            <person name="Huson D.H."/>
            <person name="Kravitz S.A."/>
            <person name="Mouchard L."/>
            <person name="Reinert K."/>
            <person name="Remington K.A."/>
            <person name="Clark A.G."/>
            <person name="Waterman M.S."/>
            <person name="Eichler E.E."/>
            <person name="Adams M.D."/>
            <person name="Hunkapiller M.W."/>
            <person name="Myers E.W."/>
            <person name="Venter J.C."/>
        </authorList>
    </citation>
    <scope>NUCLEOTIDE SEQUENCE [LARGE SCALE GENOMIC DNA]</scope>
</reference>
<reference key="5">
    <citation type="journal article" date="2004" name="Genome Res.">
        <title>The status, quality, and expansion of the NIH full-length cDNA project: the Mammalian Gene Collection (MGC).</title>
        <authorList>
            <consortium name="The MGC Project Team"/>
        </authorList>
    </citation>
    <scope>NUCLEOTIDE SEQUENCE [LARGE SCALE MRNA] (ISOFORM 2)</scope>
    <scope>NUCLEOTIDE SEQUENCE [LARGE SCALE MRNA] OF 267-579 (ISOFORM 1)</scope>
    <source>
        <tissue>Skin</tissue>
    </source>
</reference>
<reference key="6">
    <citation type="journal article" date="2003" name="J. Med. Genet.">
        <title>Alterations of the Birt-Hogg-Dube gene (BHD) in sporadic colorectal tumours.</title>
        <authorList>
            <person name="Kahnoski K."/>
            <person name="Khoo S.K."/>
            <person name="Nassif N.T."/>
            <person name="Chen J."/>
            <person name="Lobo G.P."/>
            <person name="Segelov E."/>
            <person name="Teh B.T."/>
        </authorList>
    </citation>
    <scope>POSSIBLE INVOLVEMENT IN COLORECTAL CANCER</scope>
    <scope>VARIANTS TRP-79 AND THR-445</scope>
</reference>
<reference key="7">
    <citation type="journal article" date="2003" name="J. Med. Genet.">
        <title>Analysis of the Birt-Hogg-Dube (BHD) tumour suppressor gene in sporadic renal cell carcinoma and colorectal cancer.</title>
        <authorList>
            <person name="da Silva N.F."/>
            <person name="Gentle D."/>
            <person name="Hesson L.B."/>
            <person name="Morton D.G."/>
            <person name="Latif F."/>
            <person name="Maher E.R."/>
        </authorList>
    </citation>
    <scope>POSSIBLE INVOLVEMENT IN RENAL CELL CARCINOMA AND COLORECTAL CANCER</scope>
    <scope>VARIANTS VAL-238; GLN-320; GLY-392 AND SER-444</scope>
</reference>
<reference key="8">
    <citation type="journal article" date="2005" name="Am. J. Hum. Genet.">
        <title>A 4-bp deletion in the Birt-Hogg-Dube gene (FLCN) causes dominantly inherited spontaneous pneumothorax.</title>
        <authorList>
            <person name="Painter J.N."/>
            <person name="Tapanainen H."/>
            <person name="Somer M."/>
            <person name="Tukiainen P."/>
            <person name="Aittomaeki K."/>
        </authorList>
    </citation>
    <scope>INVOLVEMENT IN PSP</scope>
</reference>
<reference key="9">
    <citation type="journal article" date="2005" name="Am. J. Hum. Genet.">
        <title>Germline BHD-mutation spectrum and phenotype analysis of a large cohort of families with Birt-Hogg-Dube syndrome.</title>
        <authorList>
            <person name="Schmidt L.S."/>
            <person name="Nickerson M.L."/>
            <person name="Warren M.B."/>
            <person name="Glenn G.M."/>
            <person name="Toro J.R."/>
            <person name="Merino M.J."/>
            <person name="Turner M.L."/>
            <person name="Choyke P.L."/>
            <person name="Sharma N."/>
            <person name="Peterson J."/>
            <person name="Morrison P."/>
            <person name="Maher E.R."/>
            <person name="Walther M.M."/>
            <person name="Zbar B."/>
            <person name="Linehan W.M."/>
        </authorList>
    </citation>
    <scope>INVOLVEMENT IN BIRT-HOGG-DUBE SYNDROME</scope>
</reference>
<reference key="10">
    <citation type="journal article" date="2006" name="Proc. Natl. Acad. Sci. U.S.A.">
        <title>Folliculin encoded by the BHD gene interacts with a binding protein, FNIP1, and AMPK, and is involved in AMPK and mTOR signaling.</title>
        <authorList>
            <person name="Baba M."/>
            <person name="Hong S.-B."/>
            <person name="Sharma N."/>
            <person name="Warren M.B."/>
            <person name="Nickerson M.L."/>
            <person name="Iwamatsu A."/>
            <person name="Esposito D."/>
            <person name="Gillette W.K."/>
            <person name="Hopkins R.F. III"/>
            <person name="Hartley J.L."/>
            <person name="Furihata M."/>
            <person name="Oishi S."/>
            <person name="Zhen W."/>
            <person name="Burke T.R. Jr."/>
            <person name="Linehan W.M."/>
            <person name="Schmidt L.S."/>
            <person name="Zbar B."/>
        </authorList>
    </citation>
    <scope>FUNCTION</scope>
    <scope>PHOSPHORYLATION</scope>
    <scope>SUBCELLULAR LOCATION</scope>
    <scope>INTERACTION WITH FNIP1</scope>
    <scope>IDENTIFICATION BY MASS SPECTROMETRY</scope>
</reference>
<reference key="11">
    <citation type="journal article" date="2007" name="J. Med. Genet.">
        <title>Mutations of the Birt Hogg Dube gene in patients with multiple lung cysts and recurrent pneumothorax.</title>
        <authorList>
            <person name="Gunji Y."/>
            <person name="Akiyoshi T."/>
            <person name="Sato T."/>
            <person name="Kurihara M."/>
            <person name="Tominaga S."/>
            <person name="Takahashi K."/>
            <person name="Seyama K."/>
        </authorList>
    </citation>
    <scope>INVOLVEMENT IN PSP</scope>
</reference>
<reference key="12">
    <citation type="journal article" date="2008" name="Gene">
        <title>Identification and characterization of a novel folliculin-interacting protein FNIP2.</title>
        <authorList>
            <person name="Hasumi H."/>
            <person name="Baba M."/>
            <person name="Hong S.-B."/>
            <person name="Hasumi Y."/>
            <person name="Huang Y."/>
            <person name="Yao M."/>
            <person name="Valera V.A."/>
            <person name="Linehan W.M."/>
            <person name="Schmidt L.S."/>
        </authorList>
    </citation>
    <scope>INTERACTION WITH FNIP2</scope>
</reference>
<reference key="13">
    <citation type="journal article" date="2008" name="Oncogene">
        <title>Interaction of folliculin (Birt-Hogg-Dube gene product) with a novel Fnip1-like (FnipL/Fnip2) protein.</title>
        <authorList>
            <person name="Takagi Y."/>
            <person name="Kobayashi T."/>
            <person name="Shiono M."/>
            <person name="Wang L."/>
            <person name="Piao X."/>
            <person name="Sun G."/>
            <person name="Zhang D."/>
            <person name="Abe M."/>
            <person name="Hagiwara Y."/>
            <person name="Takahashi K."/>
            <person name="Hino O."/>
        </authorList>
    </citation>
    <scope>FUNCTION</scope>
    <scope>SUBCELLULAR LOCATION</scope>
    <scope>INTERACTION WITH FNIP2</scope>
</reference>
<reference key="14">
    <citation type="journal article" date="2008" name="Proc. Natl. Acad. Sci. U.S.A.">
        <title>A quantitative atlas of mitotic phosphorylation.</title>
        <authorList>
            <person name="Dephoure N."/>
            <person name="Zhou C."/>
            <person name="Villen J."/>
            <person name="Beausoleil S.A."/>
            <person name="Bakalarski C.E."/>
            <person name="Elledge S.J."/>
            <person name="Gygi S.P."/>
        </authorList>
    </citation>
    <scope>PHOSPHORYLATION [LARGE SCALE ANALYSIS] AT SER-62</scope>
    <scope>IDENTIFICATION BY MASS SPECTROMETRY [LARGE SCALE ANALYSIS]</scope>
    <source>
        <tissue>Cervix carcinoma</tissue>
    </source>
</reference>
<reference key="15">
    <citation type="journal article" date="2009" name="Anal. Chem.">
        <title>Lys-N and trypsin cover complementary parts of the phosphoproteome in a refined SCX-based approach.</title>
        <authorList>
            <person name="Gauci S."/>
            <person name="Helbig A.O."/>
            <person name="Slijper M."/>
            <person name="Krijgsveld J."/>
            <person name="Heck A.J."/>
            <person name="Mohammed S."/>
        </authorList>
    </citation>
    <scope>IDENTIFICATION BY MASS SPECTROMETRY [LARGE SCALE ANALYSIS]</scope>
</reference>
<reference key="16">
    <citation type="journal article" date="2009" name="Eur. Respir. J.">
        <title>Familial spontaneous pneumothorax and lung cysts due to a Folliculin exon 10 mutation.</title>
        <authorList>
            <person name="Sundaram S."/>
            <person name="Tasker A.D."/>
            <person name="Morrell N.W."/>
        </authorList>
    </citation>
    <scope>INVOLVEMENT IN PSP</scope>
</reference>
<reference key="17">
    <citation type="journal article" date="2010" name="PLoS ONE">
        <title>Inactivation of the FLCN tumor suppressor gene induces TFE3 transcriptional activity by increasing its nuclear localization.</title>
        <authorList>
            <person name="Hong S.B."/>
            <person name="Oh H."/>
            <person name="Valera V.A."/>
            <person name="Baba M."/>
            <person name="Schmidt L.S."/>
            <person name="Linehan W.M."/>
        </authorList>
    </citation>
    <scope>FUNCTION</scope>
</reference>
<reference key="18">
    <citation type="journal article" date="2011" name="Sci. Signal.">
        <title>System-wide temporal characterization of the proteome and phosphoproteome of human embryonic stem cell differentiation.</title>
        <authorList>
            <person name="Rigbolt K.T."/>
            <person name="Prokhorova T.A."/>
            <person name="Akimov V."/>
            <person name="Henningsen J."/>
            <person name="Johansen P.T."/>
            <person name="Kratchmarova I."/>
            <person name="Kassem M."/>
            <person name="Mann M."/>
            <person name="Olsen J.V."/>
            <person name="Blagoev B."/>
        </authorList>
    </citation>
    <scope>PHOSPHORYLATION [LARGE SCALE ANALYSIS] AT SER-62</scope>
    <scope>IDENTIFICATION BY MASS SPECTROMETRY [LARGE SCALE ANALYSIS]</scope>
</reference>
<reference key="19">
    <citation type="journal article" date="2013" name="Hum. Mol. Genet.">
        <title>Birt-Hogg-Dube syndrome is a novel ciliopathy.</title>
        <authorList>
            <person name="Luijten M.N."/>
            <person name="Basten S.G."/>
            <person name="Claessens T."/>
            <person name="Vernooij M."/>
            <person name="Scott C.L."/>
            <person name="Janssen R."/>
            <person name="Easton J.A."/>
            <person name="Kamps M.A."/>
            <person name="Vreeburg M."/>
            <person name="Broers J.L."/>
            <person name="van Geel M."/>
            <person name="Menko F.H."/>
            <person name="Harbottle R.P."/>
            <person name="Nookala R.K."/>
            <person name="Tee A.R."/>
            <person name="Land S.C."/>
            <person name="Giles R.H."/>
            <person name="Coull B.J."/>
            <person name="van Steensel M.A."/>
        </authorList>
    </citation>
    <scope>SUBCELLULAR LOCATION</scope>
    <scope>INVOLVEMENT IN BHD1</scope>
</reference>
<reference key="20">
    <citation type="journal article" date="2013" name="J. Proteome Res.">
        <title>Toward a comprehensive characterization of a human cancer cell phosphoproteome.</title>
        <authorList>
            <person name="Zhou H."/>
            <person name="Di Palma S."/>
            <person name="Preisinger C."/>
            <person name="Peng M."/>
            <person name="Polat A.N."/>
            <person name="Heck A.J."/>
            <person name="Mohammed S."/>
        </authorList>
    </citation>
    <scope>PHOSPHORYLATION [LARGE SCALE ANALYSIS] AT SER-62; SER-73; SER-302 AND SER-571</scope>
    <scope>IDENTIFICATION BY MASS SPECTROMETRY [LARGE SCALE ANALYSIS]</scope>
    <source>
        <tissue>Cervix carcinoma</tissue>
        <tissue>Erythroleukemia</tissue>
    </source>
</reference>
<reference key="21">
    <citation type="journal article" date="2013" name="J. Cell Biol.">
        <title>Recruitment of folliculin to lysosomes supports the amino acid-dependent activation of Rag GTPases.</title>
        <authorList>
            <person name="Petit C.S."/>
            <person name="Roczniak-Ferguson A."/>
            <person name="Ferguson S.M."/>
        </authorList>
    </citation>
    <scope>FUNCTION</scope>
    <scope>SUBCELLULAR LOCATION</scope>
</reference>
<reference key="22">
    <citation type="journal article" date="2013" name="Mol. Cell">
        <title>The folliculin tumor suppressor is a GAP for the RagC/D GTPases that signal amino acid levels to mTORC1.</title>
        <authorList>
            <person name="Tsun Z.Y."/>
            <person name="Bar-Peled L."/>
            <person name="Chantranupong L."/>
            <person name="Zoncu R."/>
            <person name="Wang T."/>
            <person name="Kim C."/>
            <person name="Spooner E."/>
            <person name="Sabatini D.M."/>
        </authorList>
    </citation>
    <scope>FUNCTION</scope>
    <scope>SUBCELLULAR LOCATION</scope>
</reference>
<reference key="23">
    <citation type="journal article" date="2013" name="PLoS ONE">
        <title>Folliculin contributes to VHL tumor suppressing activity in renal cancer through regulation of autophagy.</title>
        <authorList>
            <person name="Bastola P."/>
            <person name="Stratton Y."/>
            <person name="Kellner E."/>
            <person name="Mikhaylova O."/>
            <person name="Yi Y."/>
            <person name="Sartor M.A."/>
            <person name="Medvedovic M."/>
            <person name="Biesiada J."/>
            <person name="Meller J."/>
            <person name="Czyzyk-Krzeska M.F."/>
        </authorList>
    </citation>
    <scope>INVOLVEMENT IN RCC</scope>
</reference>
<reference key="24">
    <citation type="journal article" date="2014" name="Autophagy">
        <title>FLCN, a novel autophagy component, interacts with GABARAP and is regulated by ULK1 phosphorylation.</title>
        <authorList>
            <person name="Dunlop E.A."/>
            <person name="Seifan S."/>
            <person name="Claessens T."/>
            <person name="Behrends C."/>
            <person name="Kamps M.A."/>
            <person name="Rozycka E."/>
            <person name="Kemp A.J."/>
            <person name="Nookala R.K."/>
            <person name="Blenis J."/>
            <person name="Coull B.J."/>
            <person name="Murray J.T."/>
            <person name="van Steensel M.A."/>
            <person name="Wilkinson S."/>
            <person name="Tee A.R."/>
        </authorList>
    </citation>
    <scope>FUNCTION</scope>
    <scope>INTERACTION WITH GABARAP; FNIP1 AND FNIP2</scope>
    <scope>PHOSPHORYLATION AT SER-406; SER-537 AND SER-542</scope>
    <scope>MUTAGENESIS OF SER-406; SER-537 AND SER-542</scope>
</reference>
<reference key="25">
    <citation type="journal article" date="2014" name="Sci. Signal.">
        <title>The nutrient-responsive transcription factor TFE3 promotes autophagy, lysosomal biogenesis, and clearance of cellular debris.</title>
        <authorList>
            <person name="Martina J.A."/>
            <person name="Diab H.I."/>
            <person name="Lishu L."/>
            <person name="Jeong-A L."/>
            <person name="Patange S."/>
            <person name="Raben N."/>
            <person name="Puertollano R."/>
        </authorList>
    </citation>
    <scope>FUNCTION</scope>
</reference>
<reference key="26">
    <citation type="journal article" date="2015" name="Lung">
        <title>Genetic analysis of familial spontaneous pneumothorax in an Indian family.</title>
        <authorList>
            <person name="Ray A."/>
            <person name="Paul S."/>
            <person name="Chattopadhyay E."/>
            <person name="Kundu S."/>
            <person name="Roy B."/>
        </authorList>
    </citation>
    <scope>INVOLVEMENT IN PSP</scope>
</reference>
<reference key="27">
    <citation type="journal article" date="2016" name="EMBO Rep.">
        <title>Folliculin directs the formation of a Rab34-RILP complex to control the nutrient-dependent dynamic distribution of lysosomes.</title>
        <authorList>
            <person name="Starling G.P."/>
            <person name="Yip Y.Y."/>
            <person name="Sanger A."/>
            <person name="Morton P.E."/>
            <person name="Eden E.R."/>
            <person name="Dodding M.P."/>
        </authorList>
    </citation>
    <scope>FUNCTION</scope>
    <scope>SUBCELLULAR LOCATION</scope>
    <scope>INTERACTION WITH RILP</scope>
</reference>
<reference key="28">
    <citation type="journal article" date="2016" name="J. Biol. Chem.">
        <title>Tumor suppressor folliculin regulates mTORC1 through primary cilia.</title>
        <authorList>
            <person name="Zhong M."/>
            <person name="Zhao X."/>
            <person name="Li J."/>
            <person name="Yuan W."/>
            <person name="Yan G."/>
            <person name="Tong M."/>
            <person name="Guo S."/>
            <person name="Zhu Y."/>
            <person name="Jiang Y."/>
            <person name="Liu Y."/>
            <person name="Jiang Y."/>
        </authorList>
    </citation>
    <scope>FUNCTION</scope>
    <scope>SUBCELLULAR LOCATION</scope>
    <scope>INTERACTION WITH KIF3A AND KIF3B</scope>
</reference>
<reference key="29">
    <citation type="journal article" date="2016" name="Nat. Commun.">
        <title>The FNIP co-chaperones decelerate the Hsp90 chaperone cycle and enhance drug binding.</title>
        <authorList>
            <person name="Woodford M.R."/>
            <person name="Dunn D.M."/>
            <person name="Blanden A.R."/>
            <person name="Capriotti D."/>
            <person name="Loiselle D."/>
            <person name="Prodromou C."/>
            <person name="Panaretou B."/>
            <person name="Hughes P.F."/>
            <person name="Smith A."/>
            <person name="Ackerman W."/>
            <person name="Haystead T.A."/>
            <person name="Loh S.N."/>
            <person name="Bourboulia D."/>
            <person name="Schmidt L.S."/>
            <person name="Marston Linehan W."/>
            <person name="Bratslavsky G."/>
            <person name="Mollapour M."/>
        </authorList>
    </citation>
    <scope>INTERACTION WITH HSP70; HSP90AA1; STUB1; CDC37; AHSA1; CCT2; STIP1; FNIP1; FNIP2; PTGES3 AND PPP5C</scope>
</reference>
<reference key="30">
    <citation type="journal article" date="2018" name="J. Cell Biol.">
        <title>GATOR1-dependent recruitment of FLCN-FNIP to lysosomes coordinates Rag GTPase heterodimer nucleotide status in response to amino acids.</title>
        <authorList>
            <person name="Meng J."/>
            <person name="Ferguson S.M."/>
        </authorList>
    </citation>
    <scope>SUBCELLULAR LOCATION</scope>
</reference>
<reference key="31">
    <citation type="journal article" date="2019" name="Hum. Mol. Genet.">
        <title>Loss of FLCN inhibits canonical WNT signaling via TFE3.</title>
        <authorList>
            <person name="Kennedy J.C."/>
            <person name="Khabibullin D."/>
            <person name="Hougard T."/>
            <person name="Nijmeh J."/>
            <person name="Shi W."/>
            <person name="Henske E.P."/>
        </authorList>
    </citation>
    <scope>FUNCTION</scope>
</reference>
<reference key="32">
    <citation type="journal article" date="2019" name="Nat. Commun.">
        <title>Folliculin regulates mTORC1/2 and WNT pathways in early human pluripotency.</title>
        <authorList>
            <person name="Mathieu J."/>
            <person name="Detraux D."/>
            <person name="Kuppers D."/>
            <person name="Wang Y."/>
            <person name="Cavanaugh C."/>
            <person name="Sidhu S."/>
            <person name="Levy S."/>
            <person name="Robitaille A.M."/>
            <person name="Ferreccio A."/>
            <person name="Bottorff T."/>
            <person name="McAlister A."/>
            <person name="Somasundaram L."/>
            <person name="Artoni F."/>
            <person name="Battle S."/>
            <person name="Hawkins R.D."/>
            <person name="Moon R.T."/>
            <person name="Ware C.B."/>
            <person name="Paddison P.J."/>
            <person name="Ruohola-Baker H."/>
        </authorList>
    </citation>
    <scope>FUNCTION</scope>
</reference>
<reference key="33">
    <citation type="journal article" date="2020" name="Nature">
        <title>A substrate-specific mTORC1 pathway underlies Birt-Hogg-Dube syndrome.</title>
        <authorList>
            <person name="Napolitano G."/>
            <person name="Di Malta C."/>
            <person name="Esposito A."/>
            <person name="de Araujo M.E.G."/>
            <person name="Pece S."/>
            <person name="Bertalot G."/>
            <person name="Matarese M."/>
            <person name="Benedetti V."/>
            <person name="Zampelli A."/>
            <person name="Stasyk T."/>
            <person name="Siciliano D."/>
            <person name="Venuta A."/>
            <person name="Cesana M."/>
            <person name="Vilardo C."/>
            <person name="Nusco E."/>
            <person name="Monfregola J."/>
            <person name="Calcagni A."/>
            <person name="Di Fiore P.P."/>
            <person name="Huber L.A."/>
            <person name="Ballabio A."/>
        </authorList>
    </citation>
    <scope>FUNCTION</scope>
</reference>
<reference key="34">
    <citation type="journal article" date="2021" name="Nat. Struct. Mol. Biol.">
        <title>The tumor suppressor folliculin inhibits lactate dehydrogenase A and regulates the Warburg effect.</title>
        <authorList>
            <person name="Woodford M.R."/>
            <person name="Baker-Williams A.J."/>
            <person name="Sager R.A."/>
            <person name="Backe S.J."/>
            <person name="Blanden A.R."/>
            <person name="Hashmi F."/>
            <person name="Kancherla P."/>
            <person name="Gori A."/>
            <person name="Loiselle D.R."/>
            <person name="Castelli M."/>
            <person name="Serapian S.A."/>
            <person name="Colombo G."/>
            <person name="Haystead T.A."/>
            <person name="Jensen S.M."/>
            <person name="Stetler-Stevenson W.G."/>
            <person name="Loh S.N."/>
            <person name="Schmidt L.S."/>
            <person name="Linehan W.M."/>
            <person name="Bah A."/>
            <person name="Bourboulia D."/>
            <person name="Bratslavsky G."/>
            <person name="Mollapour M."/>
        </authorList>
    </citation>
    <scope>FUNCTION</scope>
    <scope>INTERACTION WITH LDHA</scope>
</reference>
<reference key="35">
    <citation type="journal article" date="2023" name="Science">
        <title>Induction of lysosomal and mitochondrial biogenesis by AMPK phosphorylation of FNIP1.</title>
        <authorList>
            <person name="Malik N."/>
            <person name="Ferreira B.I."/>
            <person name="Hollstein P.E."/>
            <person name="Curtis S.D."/>
            <person name="Trefts E."/>
            <person name="Weiser Novak S."/>
            <person name="Yu J."/>
            <person name="Gilson R."/>
            <person name="Hellberg K."/>
            <person name="Fang L."/>
            <person name="Sheridan A."/>
            <person name="Hah N."/>
            <person name="Shadel G.S."/>
            <person name="Manor U."/>
            <person name="Shaw R.J."/>
        </authorList>
    </citation>
    <scope>FUNCTION</scope>
</reference>
<reference evidence="52" key="36">
    <citation type="journal article" date="2012" name="Open Biol.">
        <title>Crystal structure of folliculin reveals a hidDENN function in genetically inherited renal cancer.</title>
        <authorList>
            <person name="Nookala R.K."/>
            <person name="Langemeyer L."/>
            <person name="Pacitto A."/>
            <person name="Ochoa-Montano B."/>
            <person name="Donaldson J.C."/>
            <person name="Blaszczyk B.K."/>
            <person name="Chirgadze D.Y."/>
            <person name="Barr F.A."/>
            <person name="Bazan J.F."/>
            <person name="Blundell T.L."/>
        </authorList>
    </citation>
    <scope>X-RAY CRYSTALLOGRAPHY (2.00 ANGSTROMS) OF 341-566</scope>
</reference>
<reference evidence="54" key="37">
    <citation type="journal article" date="2019" name="Cell">
        <title>Cryo-EM structure of the human FLCN-FNIP2-Rag-Ragulator complex.</title>
        <authorList>
            <person name="Shen K."/>
            <person name="Rogala K.B."/>
            <person name="Chou H.T."/>
            <person name="Huang R.K."/>
            <person name="Yu Z."/>
            <person name="Sabatini D.M."/>
        </authorList>
    </citation>
    <scope>STRUCTURE BY ELECTRON MICROSCOPY (3.31 ANGSTROMS) IN COMPLEX WITH FNIP2; RRAGA; RRAGC; LAMTOR1; LAMTOR2; LAMTOR3; LAMTOR4 AND LAMTOR5</scope>
    <scope>FUNCTION</scope>
    <scope>IDENTIFICATION IN THE LFC COMPLEX</scope>
    <scope>MUTAGENESIS OF ARG-164</scope>
</reference>
<reference evidence="53" key="38">
    <citation type="journal article" date="2019" name="Science">
        <title>Structural mechanism of a Rag GTPase activation checkpoint by the lysosomal folliculin complex.</title>
        <authorList>
            <person name="Lawrence R.E."/>
            <person name="Fromm S.A."/>
            <person name="Fu Y."/>
            <person name="Yokom A.L."/>
            <person name="Kim D.J."/>
            <person name="Thelen A.M."/>
            <person name="Young L.N."/>
            <person name="Lim C.Y."/>
            <person name="Samelson A.J."/>
            <person name="Hurley J.H."/>
            <person name="Zoncu R."/>
        </authorList>
    </citation>
    <scope>STRUCTURE BY ELECTRON MICROSCOPY (3.60 ANGSTROMS) IN COMPLEX WITH FNIP2; RRAGA; RRAGC; LAMTOR1; LAMTOR2; LAMTOR3; LAMTOR4 AND LAMTOR5</scope>
    <scope>FUNCTION</scope>
    <scope>ACTIVITY REGULATION</scope>
    <scope>SUBCELLULAR LOCATION</scope>
    <scope>IDENTIFICATION IN THE LFC COMPLEX</scope>
    <scope>MUTAGENESIS OF PHE-118 AND ARG-164</scope>
</reference>
<reference evidence="55" key="39">
    <citation type="journal article" date="2022" name="Sci. Adv.">
        <title>Structural basis for FLCN RagC GAP activation in MiT-TFE substrate-selective mTORC1 regulation.</title>
        <authorList>
            <person name="Jansen R.M."/>
            <person name="Peruzzo R."/>
            <person name="Fromm S.A."/>
            <person name="Yokom A.L."/>
            <person name="Zoncu R."/>
            <person name="Hurley J.H."/>
        </authorList>
    </citation>
    <scope>STRUCTURE BY ELECTRON MICROSCOPY (3.53 ANGSTROMS) IN COMPLEX WITH RRAGA; RRAGC; LAMTOR1; LAMTOR2; LAMTOR3; LAMTOR4; LAMTOR5; FNIP2 AND SLC38A9</scope>
    <scope>FUNCTION</scope>
    <scope>INTERACTION WITH FNIP2</scope>
    <scope>MUTAGENESIS OF PHE-10</scope>
</reference>
<reference key="40">
    <citation type="journal article" date="2005" name="Am. J. Respir. Crit. Care Med.">
        <title>Nonsense mutations in folliculin presenting as isolated familial spontaneous pneumothorax in adults.</title>
        <authorList>
            <person name="Graham R.B."/>
            <person name="Nolasco M."/>
            <person name="Peterlin B."/>
            <person name="Garcia C.K."/>
        </authorList>
    </citation>
    <scope>VARIANTS PSP 315-GLU--ASN-579 DEL AND 477-ARG--ASN-579 DEL</scope>
</reference>
<reference key="41">
    <citation type="journal article" date="2008" name="Clin. Cancer Res.">
        <title>Familial non-VHL clear cell (conventional) renal cell carcinoma: clinical features, segregation analysis, and mutation analysis of FLCN.</title>
        <authorList>
            <person name="Woodward E.R."/>
            <person name="Ricketts C."/>
            <person name="Killick P."/>
            <person name="Gad S."/>
            <person name="Morris M.R."/>
            <person name="Kavalier F."/>
            <person name="Hodgson S.V."/>
            <person name="Giraud S."/>
            <person name="Bressac-de Paillerets B."/>
            <person name="Chapman C."/>
            <person name="Escudier B."/>
            <person name="Latif F."/>
            <person name="Richard S."/>
            <person name="Maher E.R."/>
        </authorList>
    </citation>
    <scope>VARIANT RCC CYS-239</scope>
</reference>
<reference key="42">
    <citation type="journal article" date="2008" name="Clin. Genet.">
        <title>Mutation analysis of the FLCN gene in Chinese patients with sporadic and familial isolated primary spontaneous pneumothorax.</title>
        <authorList>
            <person name="Ren H.Z."/>
            <person name="Zhu C.C."/>
            <person name="Yang C."/>
            <person name="Chen S.L."/>
            <person name="Xie J."/>
            <person name="Hou Y.Y."/>
            <person name="Xu Z.F."/>
            <person name="Wang D.J."/>
            <person name="Mu D.K."/>
            <person name="Ma D.H."/>
            <person name="Wang Y."/>
            <person name="Ye M.H."/>
            <person name="Ye Z.R."/>
            <person name="Chen B.F."/>
            <person name="Wang C.G."/>
            <person name="Lin J."/>
            <person name="Qiao D."/>
            <person name="Yi L."/>
        </authorList>
    </citation>
    <scope>VARIANTS PSP PHE-157 DEL AND TYR-429</scope>
</reference>
<reference key="43">
    <citation type="journal article" date="2008" name="Eur. Respir. J.">
        <title>Novel mutations in the folliculin gene associated with spontaneous pneumothorax.</title>
        <authorList>
            <person name="Frohlich B.A."/>
            <person name="Zeitz C."/>
            <person name="Matyas G."/>
            <person name="Alkadhi H."/>
            <person name="Tuor C."/>
            <person name="Berger W."/>
            <person name="Russi E.W."/>
        </authorList>
    </citation>
    <scope>VARIANT PSP LYS-132</scope>
</reference>
<reference key="44">
    <citation type="journal article" date="2008" name="J. Med. Genet.">
        <title>BHD mutations, clinical and molecular genetic investigations of Birt-Hogg-Dube syndrome: a new series of 50 families and a review of published reports.</title>
        <authorList>
            <person name="Toro J.R."/>
            <person name="Wei M.H."/>
            <person name="Glenn G.M."/>
            <person name="Weinreich M."/>
            <person name="Toure O."/>
            <person name="Vocke C."/>
            <person name="Turner M."/>
            <person name="Choyke P."/>
            <person name="Merino M.J."/>
            <person name="Pinto P.A."/>
            <person name="Steinberg S.M."/>
            <person name="Schmidt L.S."/>
            <person name="Linehan W.M."/>
        </authorList>
    </citation>
    <scope>VARIANT BHD1 ARG-508</scope>
</reference>
<reference key="45">
    <citation type="journal article" date="2010" name="Br. J. Dermatol.">
        <title>Birt-Hogg-Dube syndrome: clinical and genetic studies of 10 French families.</title>
        <authorList>
            <person name="Kluger N."/>
            <person name="Giraud S."/>
            <person name="Coupier I."/>
            <person name="Avril M.F."/>
            <person name="Dereure O."/>
            <person name="Guillot B."/>
            <person name="Richard S."/>
            <person name="Bessis D."/>
        </authorList>
    </citation>
    <scope>VARIANT BHD1 ILE-108</scope>
</reference>
<reference key="46">
    <citation type="journal article" date="2011" name="Hum. Mutat.">
        <title>Birt Hogg-Dube syndrome-associated FLCN mutations disrupt protein stability.</title>
        <authorList>
            <person name="Nahorski M.S."/>
            <person name="Reiman A."/>
            <person name="Lim D.H."/>
            <person name="Nookala R.K."/>
            <person name="Seabra L."/>
            <person name="Lu X."/>
            <person name="Fenton J."/>
            <person name="Boora U."/>
            <person name="Nordenskjold M."/>
            <person name="Latif F."/>
            <person name="Hurst L.D."/>
            <person name="Maher E.R."/>
        </authorList>
    </citation>
    <scope>VARIANT CYS-362</scope>
    <scope>CHARACTERIZATION OF VARIANTS PHE-157 DEL; CYS-239; CYS-362 AND ARG-508</scope>
</reference>
<reference key="47">
    <citation type="journal article" date="2017" name="QJM">
        <title>Novel folliculin (FLCN) mutation and familial spontaneous pneumothorax.</title>
        <authorList>
            <person name="Zhu J.F."/>
            <person name="Shen X.Q."/>
            <person name="Zhu F."/>
            <person name="Tian L."/>
        </authorList>
    </citation>
    <scope>VARIANT PSP 170-TYR--ASN-579 DEL</scope>
</reference>
<reference key="48">
    <citation type="journal article" date="2019" name="Mol. Genet. Genomic Med.">
        <title>A novel FLCN mutation in family members diagnosed with primary spontaneous pneumothorax.</title>
        <authorList>
            <person name="Genc Yavuz B."/>
            <person name="Guzel Tanoglu E."/>
            <person name="Salman Yilmaz S."/>
            <person name="Colak S."/>
        </authorList>
    </citation>
    <scope>VARIANT PSP 425-GLN--ASN-579 DEL</scope>
</reference>
<reference key="49">
    <citation type="journal article" date="2019" name="Orphanet J. Rare Dis.">
        <title>Genotypic characteristics of Chinese patients with BHD syndrome and functional analysis of FLCN variants.</title>
        <authorList>
            <person name="Liu K."/>
            <person name="Xu W."/>
            <person name="Tian X."/>
            <person name="Xiao M."/>
            <person name="Zhao X."/>
            <person name="Zhang Q."/>
            <person name="Qu T."/>
            <person name="Song J."/>
            <person name="Liu Y."/>
            <person name="Xu K.F."/>
            <person name="Zhang X."/>
        </authorList>
    </citation>
    <scope>VARIANTS BHD1 PHE-157 DEL; 220-GLN--ASN-579 DEL; 339-GLN--ASN-579 DEL; 409-TYR--ASN-579 DEL; 511-TRP--ASN-579 DEL AND 533-GLN--ASN-579 DEL</scope>
</reference>
<evidence type="ECO:0000250" key="1">
    <source>
        <dbReference type="UniProtKB" id="Q8QZS3"/>
    </source>
</evidence>
<evidence type="ECO:0000255" key="2"/>
<evidence type="ECO:0000255" key="3">
    <source>
        <dbReference type="PROSITE-ProRule" id="PRU01178"/>
    </source>
</evidence>
<evidence type="ECO:0000256" key="4">
    <source>
        <dbReference type="SAM" id="MobiDB-lite"/>
    </source>
</evidence>
<evidence type="ECO:0000269" key="5">
    <source>
    </source>
</evidence>
<evidence type="ECO:0000269" key="6">
    <source>
    </source>
</evidence>
<evidence type="ECO:0000269" key="7">
    <source>
    </source>
</evidence>
<evidence type="ECO:0000269" key="8">
    <source>
    </source>
</evidence>
<evidence type="ECO:0000269" key="9">
    <source>
    </source>
</evidence>
<evidence type="ECO:0000269" key="10">
    <source>
    </source>
</evidence>
<evidence type="ECO:0000269" key="11">
    <source>
    </source>
</evidence>
<evidence type="ECO:0000269" key="12">
    <source>
    </source>
</evidence>
<evidence type="ECO:0000269" key="13">
    <source>
    </source>
</evidence>
<evidence type="ECO:0000269" key="14">
    <source>
    </source>
</evidence>
<evidence type="ECO:0000269" key="15">
    <source>
    </source>
</evidence>
<evidence type="ECO:0000269" key="16">
    <source>
    </source>
</evidence>
<evidence type="ECO:0000269" key="17">
    <source>
    </source>
</evidence>
<evidence type="ECO:0000269" key="18">
    <source>
    </source>
</evidence>
<evidence type="ECO:0000269" key="19">
    <source>
    </source>
</evidence>
<evidence type="ECO:0000269" key="20">
    <source>
    </source>
</evidence>
<evidence type="ECO:0000269" key="21">
    <source>
    </source>
</evidence>
<evidence type="ECO:0000269" key="22">
    <source>
    </source>
</evidence>
<evidence type="ECO:0000269" key="23">
    <source>
    </source>
</evidence>
<evidence type="ECO:0000269" key="24">
    <source>
    </source>
</evidence>
<evidence type="ECO:0000269" key="25">
    <source>
    </source>
</evidence>
<evidence type="ECO:0000269" key="26">
    <source>
    </source>
</evidence>
<evidence type="ECO:0000269" key="27">
    <source>
    </source>
</evidence>
<evidence type="ECO:0000269" key="28">
    <source>
    </source>
</evidence>
<evidence type="ECO:0000269" key="29">
    <source>
    </source>
</evidence>
<evidence type="ECO:0000269" key="30">
    <source>
    </source>
</evidence>
<evidence type="ECO:0000269" key="31">
    <source>
    </source>
</evidence>
<evidence type="ECO:0000269" key="32">
    <source>
    </source>
</evidence>
<evidence type="ECO:0000269" key="33">
    <source>
    </source>
</evidence>
<evidence type="ECO:0000269" key="34">
    <source>
    </source>
</evidence>
<evidence type="ECO:0000269" key="35">
    <source>
    </source>
</evidence>
<evidence type="ECO:0000269" key="36">
    <source>
    </source>
</evidence>
<evidence type="ECO:0000269" key="37">
    <source>
    </source>
</evidence>
<evidence type="ECO:0000269" key="38">
    <source>
    </source>
</evidence>
<evidence type="ECO:0000269" key="39">
    <source>
    </source>
</evidence>
<evidence type="ECO:0000269" key="40">
    <source>
    </source>
</evidence>
<evidence type="ECO:0000269" key="41">
    <source>
    </source>
</evidence>
<evidence type="ECO:0000269" key="42">
    <source>
    </source>
</evidence>
<evidence type="ECO:0000269" key="43">
    <source>
    </source>
</evidence>
<evidence type="ECO:0000269" key="44">
    <source>
    </source>
</evidence>
<evidence type="ECO:0000269" key="45">
    <source>
    </source>
</evidence>
<evidence type="ECO:0000303" key="46">
    <source>
    </source>
</evidence>
<evidence type="ECO:0000303" key="47">
    <source>
    </source>
</evidence>
<evidence type="ECO:0000303" key="48">
    <source>
    </source>
</evidence>
<evidence type="ECO:0000303" key="49">
    <source>
    </source>
</evidence>
<evidence type="ECO:0000305" key="50"/>
<evidence type="ECO:0000312" key="51">
    <source>
        <dbReference type="HGNC" id="HGNC:27310"/>
    </source>
</evidence>
<evidence type="ECO:0007744" key="52">
    <source>
        <dbReference type="PDB" id="3V42"/>
    </source>
</evidence>
<evidence type="ECO:0007744" key="53">
    <source>
        <dbReference type="PDB" id="6NZD"/>
    </source>
</evidence>
<evidence type="ECO:0007744" key="54">
    <source>
        <dbReference type="PDB" id="6ULG"/>
    </source>
</evidence>
<evidence type="ECO:0007744" key="55">
    <source>
        <dbReference type="PDB" id="8DHB"/>
    </source>
</evidence>
<evidence type="ECO:0007744" key="56">
    <source>
    </source>
</evidence>
<evidence type="ECO:0007744" key="57">
    <source>
    </source>
</evidence>
<evidence type="ECO:0007744" key="58">
    <source>
    </source>
</evidence>
<evidence type="ECO:0007829" key="59">
    <source>
        <dbReference type="PDB" id="3V42"/>
    </source>
</evidence>
<evidence type="ECO:0007829" key="60">
    <source>
        <dbReference type="PDB" id="6ULG"/>
    </source>
</evidence>
<gene>
    <name evidence="49 51" type="primary">FLCN</name>
    <name evidence="46" type="synonym">BHD</name>
</gene>
<protein>
    <recommendedName>
        <fullName evidence="49">Folliculin</fullName>
    </recommendedName>
    <alternativeName>
        <fullName evidence="46">BHD skin lesion fibrofolliculoma protein</fullName>
    </alternativeName>
    <alternativeName>
        <fullName evidence="46">Birt-Hogg-Dube syndrome protein</fullName>
    </alternativeName>
</protein>
<organism>
    <name type="scientific">Homo sapiens</name>
    <name type="common">Human</name>
    <dbReference type="NCBI Taxonomy" id="9606"/>
    <lineage>
        <taxon>Eukaryota</taxon>
        <taxon>Metazoa</taxon>
        <taxon>Chordata</taxon>
        <taxon>Craniata</taxon>
        <taxon>Vertebrata</taxon>
        <taxon>Euteleostomi</taxon>
        <taxon>Mammalia</taxon>
        <taxon>Eutheria</taxon>
        <taxon>Euarchontoglires</taxon>
        <taxon>Primates</taxon>
        <taxon>Haplorrhini</taxon>
        <taxon>Catarrhini</taxon>
        <taxon>Hominidae</taxon>
        <taxon>Homo</taxon>
    </lineage>
</organism>
<dbReference type="EMBL" id="AF517523">
    <property type="protein sequence ID" value="AAM94803.1"/>
    <property type="molecule type" value="mRNA"/>
</dbReference>
<dbReference type="EMBL" id="AK127912">
    <property type="protein sequence ID" value="BAC87186.1"/>
    <property type="molecule type" value="mRNA"/>
</dbReference>
<dbReference type="EMBL" id="AK126951">
    <property type="protein sequence ID" value="BAC86760.1"/>
    <property type="molecule type" value="mRNA"/>
</dbReference>
<dbReference type="EMBL" id="AC055811">
    <property type="status" value="NOT_ANNOTATED_CDS"/>
    <property type="molecule type" value="Genomic_DNA"/>
</dbReference>
<dbReference type="EMBL" id="CH471196">
    <property type="protein sequence ID" value="EAW55716.1"/>
    <property type="molecule type" value="Genomic_DNA"/>
</dbReference>
<dbReference type="EMBL" id="BC015687">
    <property type="protein sequence ID" value="AAH15687.1"/>
    <property type="molecule type" value="mRNA"/>
</dbReference>
<dbReference type="EMBL" id="BC015725">
    <property type="protein sequence ID" value="AAH15725.2"/>
    <property type="molecule type" value="mRNA"/>
</dbReference>
<dbReference type="CCDS" id="CCDS32579.1">
    <molecule id="Q8NFG4-1"/>
</dbReference>
<dbReference type="CCDS" id="CCDS32580.1">
    <molecule id="Q8NFG4-2"/>
</dbReference>
<dbReference type="RefSeq" id="NP_001340159.1">
    <molecule id="Q8NFG4-1"/>
    <property type="nucleotide sequence ID" value="NM_001353230.2"/>
</dbReference>
<dbReference type="RefSeq" id="NP_001340160.1">
    <molecule id="Q8NFG4-1"/>
    <property type="nucleotide sequence ID" value="NM_001353231.2"/>
</dbReference>
<dbReference type="RefSeq" id="NP_653207.1">
    <molecule id="Q8NFG4-2"/>
    <property type="nucleotide sequence ID" value="NM_144606.7"/>
</dbReference>
<dbReference type="RefSeq" id="NP_659434.2">
    <molecule id="Q8NFG4-1"/>
    <property type="nucleotide sequence ID" value="NM_144997.5"/>
</dbReference>
<dbReference type="RefSeq" id="XP_016879795.1">
    <property type="nucleotide sequence ID" value="XM_017024306.1"/>
</dbReference>
<dbReference type="RefSeq" id="XP_016879796.1">
    <property type="nucleotide sequence ID" value="XM_017024307.1"/>
</dbReference>
<dbReference type="RefSeq" id="XP_016879797.1">
    <molecule id="Q8NFG4-1"/>
    <property type="nucleotide sequence ID" value="XM_017024308.2"/>
</dbReference>
<dbReference type="RefSeq" id="XP_047291491.1">
    <molecule id="Q8NFG4-1"/>
    <property type="nucleotide sequence ID" value="XM_047435535.1"/>
</dbReference>
<dbReference type="RefSeq" id="XP_047291492.1">
    <molecule id="Q8NFG4-1"/>
    <property type="nucleotide sequence ID" value="XM_047435536.1"/>
</dbReference>
<dbReference type="RefSeq" id="XP_047291493.1">
    <molecule id="Q8NFG4-1"/>
    <property type="nucleotide sequence ID" value="XM_047435537.1"/>
</dbReference>
<dbReference type="RefSeq" id="XP_047291494.1">
    <molecule id="Q8NFG4-1"/>
    <property type="nucleotide sequence ID" value="XM_047435538.1"/>
</dbReference>
<dbReference type="RefSeq" id="XP_054171315.1">
    <molecule id="Q8NFG4-1"/>
    <property type="nucleotide sequence ID" value="XM_054315340.1"/>
</dbReference>
<dbReference type="RefSeq" id="XP_054171316.1">
    <molecule id="Q8NFG4-1"/>
    <property type="nucleotide sequence ID" value="XM_054315341.1"/>
</dbReference>
<dbReference type="RefSeq" id="XP_054171317.1">
    <molecule id="Q8NFG4-1"/>
    <property type="nucleotide sequence ID" value="XM_054315342.1"/>
</dbReference>
<dbReference type="RefSeq" id="XP_054171318.1">
    <molecule id="Q8NFG4-1"/>
    <property type="nucleotide sequence ID" value="XM_054315343.1"/>
</dbReference>
<dbReference type="RefSeq" id="XP_054171319.1">
    <molecule id="Q8NFG4-1"/>
    <property type="nucleotide sequence ID" value="XM_054315344.1"/>
</dbReference>
<dbReference type="PDB" id="3V42">
    <property type="method" value="X-ray"/>
    <property type="resolution" value="2.00 A"/>
    <property type="chains" value="A/B=341-566"/>
</dbReference>
<dbReference type="PDB" id="6NZD">
    <property type="method" value="EM"/>
    <property type="resolution" value="3.60 A"/>
    <property type="chains" value="H=1-579"/>
</dbReference>
<dbReference type="PDB" id="6ULG">
    <property type="method" value="EM"/>
    <property type="resolution" value="3.31 A"/>
    <property type="chains" value="L=1-579"/>
</dbReference>
<dbReference type="PDB" id="8DHB">
    <property type="method" value="EM"/>
    <property type="resolution" value="3.53 A"/>
    <property type="chains" value="J=1-579"/>
</dbReference>
<dbReference type="PDBsum" id="3V42"/>
<dbReference type="PDBsum" id="6NZD"/>
<dbReference type="PDBsum" id="6ULG"/>
<dbReference type="PDBsum" id="8DHB"/>
<dbReference type="EMDB" id="EMD-0554"/>
<dbReference type="EMDB" id="EMD-20814"/>
<dbReference type="EMDB" id="EMD-27435"/>
<dbReference type="SMR" id="Q8NFG4"/>
<dbReference type="BioGRID" id="128366">
    <property type="interactions" value="104"/>
</dbReference>
<dbReference type="ComplexPortal" id="CPX-2440">
    <property type="entry name" value="FLCN-FNIP GTPase-activating complex, FNIP2 variant"/>
</dbReference>
<dbReference type="ComplexPortal" id="CPX-2624">
    <property type="entry name" value="FLCN-FNIP GTPase-activating complex, FNIP1 variant"/>
</dbReference>
<dbReference type="CORUM" id="Q8NFG4"/>
<dbReference type="DIP" id="DIP-61287N"/>
<dbReference type="FunCoup" id="Q8NFG4">
    <property type="interactions" value="2290"/>
</dbReference>
<dbReference type="IntAct" id="Q8NFG4">
    <property type="interactions" value="44"/>
</dbReference>
<dbReference type="MINT" id="Q8NFG4"/>
<dbReference type="STRING" id="9606.ENSP00000285071"/>
<dbReference type="GlyGen" id="Q8NFG4">
    <property type="glycosylation" value="2 sites, 1 O-linked glycan (2 sites)"/>
</dbReference>
<dbReference type="iPTMnet" id="Q8NFG4"/>
<dbReference type="MetOSite" id="Q8NFG4"/>
<dbReference type="PhosphoSitePlus" id="Q8NFG4"/>
<dbReference type="BioMuta" id="FLCN"/>
<dbReference type="DMDM" id="74751276"/>
<dbReference type="jPOST" id="Q8NFG4"/>
<dbReference type="MassIVE" id="Q8NFG4"/>
<dbReference type="PaxDb" id="9606-ENSP00000285071"/>
<dbReference type="PeptideAtlas" id="Q8NFG4"/>
<dbReference type="ProteomicsDB" id="73302">
    <molecule id="Q8NFG4-1"/>
</dbReference>
<dbReference type="ProteomicsDB" id="73303">
    <molecule id="Q8NFG4-2"/>
</dbReference>
<dbReference type="ProteomicsDB" id="73304">
    <molecule id="Q8NFG4-3"/>
</dbReference>
<dbReference type="Pumba" id="Q8NFG4"/>
<dbReference type="Antibodypedia" id="4192">
    <property type="antibodies" value="314 antibodies from 37 providers"/>
</dbReference>
<dbReference type="DNASU" id="201163"/>
<dbReference type="Ensembl" id="ENST00000285071.9">
    <molecule id="Q8NFG4-1"/>
    <property type="protein sequence ID" value="ENSP00000285071.4"/>
    <property type="gene ID" value="ENSG00000154803.13"/>
</dbReference>
<dbReference type="Ensembl" id="ENST00000389169.9">
    <molecule id="Q8NFG4-2"/>
    <property type="protein sequence ID" value="ENSP00000373821.5"/>
    <property type="gene ID" value="ENSG00000154803.13"/>
</dbReference>
<dbReference type="GeneID" id="201163"/>
<dbReference type="KEGG" id="hsa:201163"/>
<dbReference type="MANE-Select" id="ENST00000285071.9">
    <property type="protein sequence ID" value="ENSP00000285071.4"/>
    <property type="RefSeq nucleotide sequence ID" value="NM_144997.7"/>
    <property type="RefSeq protein sequence ID" value="NP_659434.2"/>
</dbReference>
<dbReference type="UCSC" id="uc002gra.5">
    <molecule id="Q8NFG4-1"/>
    <property type="organism name" value="human"/>
</dbReference>
<dbReference type="AGR" id="HGNC:27310"/>
<dbReference type="CTD" id="201163"/>
<dbReference type="DisGeNET" id="201163"/>
<dbReference type="GeneCards" id="FLCN"/>
<dbReference type="GeneReviews" id="FLCN"/>
<dbReference type="HGNC" id="HGNC:27310">
    <property type="gene designation" value="FLCN"/>
</dbReference>
<dbReference type="HPA" id="ENSG00000154803">
    <property type="expression patterns" value="Low tissue specificity"/>
</dbReference>
<dbReference type="MalaCards" id="FLCN"/>
<dbReference type="MIM" id="135150">
    <property type="type" value="phenotype"/>
</dbReference>
<dbReference type="MIM" id="144700">
    <property type="type" value="phenotype"/>
</dbReference>
<dbReference type="MIM" id="173600">
    <property type="type" value="phenotype"/>
</dbReference>
<dbReference type="MIM" id="607273">
    <property type="type" value="gene"/>
</dbReference>
<dbReference type="neXtProt" id="NX_Q8NFG4"/>
<dbReference type="OpenTargets" id="ENSG00000154803"/>
<dbReference type="Orphanet" id="122">
    <property type="disease" value="Birt-Hogg-Dube syndrome"/>
</dbReference>
<dbReference type="Orphanet" id="2903">
    <property type="disease" value="Familial spontaneous pneumothorax"/>
</dbReference>
<dbReference type="Orphanet" id="422526">
    <property type="disease" value="Hereditary clear cell renal cell carcinoma"/>
</dbReference>
<dbReference type="PharmGKB" id="PA134901005"/>
<dbReference type="VEuPathDB" id="HostDB:ENSG00000154803"/>
<dbReference type="eggNOG" id="KOG3715">
    <property type="taxonomic scope" value="Eukaryota"/>
</dbReference>
<dbReference type="GeneTree" id="ENSGT00390000009864"/>
<dbReference type="HOGENOM" id="CLU_035854_2_0_1"/>
<dbReference type="InParanoid" id="Q8NFG4"/>
<dbReference type="OMA" id="LWASLHC"/>
<dbReference type="OrthoDB" id="5599713at2759"/>
<dbReference type="PAN-GO" id="Q8NFG4">
    <property type="GO annotations" value="5 GO annotations based on evolutionary models"/>
</dbReference>
<dbReference type="PhylomeDB" id="Q8NFG4"/>
<dbReference type="TreeFam" id="TF315084"/>
<dbReference type="PathwayCommons" id="Q8NFG4"/>
<dbReference type="Reactome" id="R-HSA-9639288">
    <property type="pathway name" value="Amino acids regulate mTORC1"/>
</dbReference>
<dbReference type="SignaLink" id="Q8NFG4"/>
<dbReference type="SIGNOR" id="Q8NFG4"/>
<dbReference type="BioGRID-ORCS" id="201163">
    <property type="hits" value="92 hits in 1159 CRISPR screens"/>
</dbReference>
<dbReference type="ChiTaRS" id="FLCN">
    <property type="organism name" value="human"/>
</dbReference>
<dbReference type="EvolutionaryTrace" id="Q8NFG4"/>
<dbReference type="GeneWiki" id="Folliculin"/>
<dbReference type="GenomeRNAi" id="201163"/>
<dbReference type="Pharos" id="Q8NFG4">
    <property type="development level" value="Tbio"/>
</dbReference>
<dbReference type="PRO" id="PR:Q8NFG4"/>
<dbReference type="Proteomes" id="UP000005640">
    <property type="component" value="Chromosome 17"/>
</dbReference>
<dbReference type="RNAct" id="Q8NFG4">
    <property type="molecule type" value="protein"/>
</dbReference>
<dbReference type="Bgee" id="ENSG00000154803">
    <property type="expression patterns" value="Expressed in buccal mucosa cell and 181 other cell types or tissues"/>
</dbReference>
<dbReference type="ExpressionAtlas" id="Q8NFG4">
    <property type="expression patterns" value="baseline and differential"/>
</dbReference>
<dbReference type="GO" id="GO:0005813">
    <property type="term" value="C:centrosome"/>
    <property type="evidence" value="ECO:0000314"/>
    <property type="project" value="UniProtKB"/>
</dbReference>
<dbReference type="GO" id="GO:0005929">
    <property type="term" value="C:cilium"/>
    <property type="evidence" value="ECO:0000314"/>
    <property type="project" value="UniProtKB"/>
</dbReference>
<dbReference type="GO" id="GO:0005737">
    <property type="term" value="C:cytoplasm"/>
    <property type="evidence" value="ECO:0000314"/>
    <property type="project" value="UniProtKB"/>
</dbReference>
<dbReference type="GO" id="GO:0005829">
    <property type="term" value="C:cytosol"/>
    <property type="evidence" value="ECO:0000314"/>
    <property type="project" value="HPA"/>
</dbReference>
<dbReference type="GO" id="GO:1990877">
    <property type="term" value="C:FNIP-folliculin RagC/D GAP"/>
    <property type="evidence" value="ECO:0000314"/>
    <property type="project" value="UniProtKB"/>
</dbReference>
<dbReference type="GO" id="GO:0043231">
    <property type="term" value="C:intracellular membrane-bounded organelle"/>
    <property type="evidence" value="ECO:0000314"/>
    <property type="project" value="HPA"/>
</dbReference>
<dbReference type="GO" id="GO:0005765">
    <property type="term" value="C:lysosomal membrane"/>
    <property type="evidence" value="ECO:0000314"/>
    <property type="project" value="UniProtKB"/>
</dbReference>
<dbReference type="GO" id="GO:0005764">
    <property type="term" value="C:lysosome"/>
    <property type="evidence" value="ECO:0000304"/>
    <property type="project" value="ParkinsonsUK-UCL"/>
</dbReference>
<dbReference type="GO" id="GO:0072686">
    <property type="term" value="C:mitotic spindle"/>
    <property type="evidence" value="ECO:0000314"/>
    <property type="project" value="UniProtKB"/>
</dbReference>
<dbReference type="GO" id="GO:0005634">
    <property type="term" value="C:nucleus"/>
    <property type="evidence" value="ECO:0000314"/>
    <property type="project" value="UniProtKB"/>
</dbReference>
<dbReference type="GO" id="GO:0005886">
    <property type="term" value="C:plasma membrane"/>
    <property type="evidence" value="ECO:0000314"/>
    <property type="project" value="HPA"/>
</dbReference>
<dbReference type="GO" id="GO:0019899">
    <property type="term" value="F:enzyme binding"/>
    <property type="evidence" value="ECO:0000353"/>
    <property type="project" value="UniProtKB"/>
</dbReference>
<dbReference type="GO" id="GO:0004857">
    <property type="term" value="F:enzyme inhibitor activity"/>
    <property type="evidence" value="ECO:0000314"/>
    <property type="project" value="UniProtKB"/>
</dbReference>
<dbReference type="GO" id="GO:0005096">
    <property type="term" value="F:GTPase activator activity"/>
    <property type="evidence" value="ECO:0000314"/>
    <property type="project" value="UniProtKB"/>
</dbReference>
<dbReference type="GO" id="GO:0044877">
    <property type="term" value="F:protein-containing complex binding"/>
    <property type="evidence" value="ECO:0000314"/>
    <property type="project" value="UniProtKB"/>
</dbReference>
<dbReference type="GO" id="GO:0072111">
    <property type="term" value="P:cell proliferation involved in kidney development"/>
    <property type="evidence" value="ECO:0007669"/>
    <property type="project" value="Ensembl"/>
</dbReference>
<dbReference type="GO" id="GO:0007043">
    <property type="term" value="P:cell-cell junction assembly"/>
    <property type="evidence" value="ECO:0000250"/>
    <property type="project" value="UniProtKB"/>
</dbReference>
<dbReference type="GO" id="GO:0034198">
    <property type="term" value="P:cellular response to amino acid starvation"/>
    <property type="evidence" value="ECO:0000314"/>
    <property type="project" value="UniProtKB"/>
</dbReference>
<dbReference type="GO" id="GO:0009267">
    <property type="term" value="P:cellular response to starvation"/>
    <property type="evidence" value="ECO:0000314"/>
    <property type="project" value="UniProtKB"/>
</dbReference>
<dbReference type="GO" id="GO:0097009">
    <property type="term" value="P:energy homeostasis"/>
    <property type="evidence" value="ECO:0000250"/>
    <property type="project" value="UniProtKB"/>
</dbReference>
<dbReference type="GO" id="GO:0050673">
    <property type="term" value="P:epithelial cell proliferation"/>
    <property type="evidence" value="ECO:0007669"/>
    <property type="project" value="Ensembl"/>
</dbReference>
<dbReference type="GO" id="GO:0070371">
    <property type="term" value="P:ERK1 and ERK2 cascade"/>
    <property type="evidence" value="ECO:0007669"/>
    <property type="project" value="Ensembl"/>
</dbReference>
<dbReference type="GO" id="GO:0030097">
    <property type="term" value="P:hemopoiesis"/>
    <property type="evidence" value="ECO:0000250"/>
    <property type="project" value="UniProtKB"/>
</dbReference>
<dbReference type="GO" id="GO:0001701">
    <property type="term" value="P:in utero embryonic development"/>
    <property type="evidence" value="ECO:0000250"/>
    <property type="project" value="UniProtKB"/>
</dbReference>
<dbReference type="GO" id="GO:0035556">
    <property type="term" value="P:intracellular signal transduction"/>
    <property type="evidence" value="ECO:0000314"/>
    <property type="project" value="UniProtKB"/>
</dbReference>
<dbReference type="GO" id="GO:0097193">
    <property type="term" value="P:intrinsic apoptotic signaling pathway"/>
    <property type="evidence" value="ECO:0007669"/>
    <property type="project" value="Ensembl"/>
</dbReference>
<dbReference type="GO" id="GO:0032418">
    <property type="term" value="P:lysosome localization"/>
    <property type="evidence" value="ECO:0000314"/>
    <property type="project" value="UniProtKB"/>
</dbReference>
<dbReference type="GO" id="GO:1903444">
    <property type="term" value="P:negative regulation of brown fat cell differentiation"/>
    <property type="evidence" value="ECO:0000250"/>
    <property type="project" value="UniProtKB"/>
</dbReference>
<dbReference type="GO" id="GO:1901723">
    <property type="term" value="P:negative regulation of cell proliferation involved in kidney development"/>
    <property type="evidence" value="ECO:0000250"/>
    <property type="project" value="UniProtKB"/>
</dbReference>
<dbReference type="GO" id="GO:0120163">
    <property type="term" value="P:negative regulation of cold-induced thermogenesis"/>
    <property type="evidence" value="ECO:0000250"/>
    <property type="project" value="YuBioLab"/>
</dbReference>
<dbReference type="GO" id="GO:0050680">
    <property type="term" value="P:negative regulation of epithelial cell proliferation"/>
    <property type="evidence" value="ECO:0007669"/>
    <property type="project" value="Ensembl"/>
</dbReference>
<dbReference type="GO" id="GO:0070373">
    <property type="term" value="P:negative regulation of ERK1 and ERK2 cascade"/>
    <property type="evidence" value="ECO:0000250"/>
    <property type="project" value="UniProtKB"/>
</dbReference>
<dbReference type="GO" id="GO:0045820">
    <property type="term" value="P:negative regulation of glycolytic process"/>
    <property type="evidence" value="ECO:0000314"/>
    <property type="project" value="UniProtKB"/>
</dbReference>
<dbReference type="GO" id="GO:1905672">
    <property type="term" value="P:negative regulation of lysosome organization"/>
    <property type="evidence" value="ECO:0000314"/>
    <property type="project" value="UniProtKB"/>
</dbReference>
<dbReference type="GO" id="GO:0051898">
    <property type="term" value="P:negative regulation of phosphatidylinositol 3-kinase/protein kinase B signal transduction"/>
    <property type="evidence" value="ECO:0000250"/>
    <property type="project" value="UniProtKB"/>
</dbReference>
<dbReference type="GO" id="GO:1901874">
    <property type="term" value="P:negative regulation of post-translational protein modification"/>
    <property type="evidence" value="ECO:0007669"/>
    <property type="project" value="Ensembl"/>
</dbReference>
<dbReference type="GO" id="GO:0035024">
    <property type="term" value="P:negative regulation of Rho protein signal transduction"/>
    <property type="evidence" value="ECO:0000315"/>
    <property type="project" value="UniProtKB"/>
</dbReference>
<dbReference type="GO" id="GO:0032007">
    <property type="term" value="P:negative regulation of TOR signaling"/>
    <property type="evidence" value="ECO:0000250"/>
    <property type="project" value="UniProtKB"/>
</dbReference>
<dbReference type="GO" id="GO:0000122">
    <property type="term" value="P:negative regulation of transcription by RNA polymerase II"/>
    <property type="evidence" value="ECO:0000315"/>
    <property type="project" value="UniProtKB"/>
</dbReference>
<dbReference type="GO" id="GO:0043491">
    <property type="term" value="P:phosphatidylinositol 3-kinase/protein kinase B signal transduction"/>
    <property type="evidence" value="ECO:0007669"/>
    <property type="project" value="Ensembl"/>
</dbReference>
<dbReference type="GO" id="GO:0043065">
    <property type="term" value="P:positive regulation of apoptotic process"/>
    <property type="evidence" value="ECO:0000250"/>
    <property type="project" value="UniProtKB"/>
</dbReference>
<dbReference type="GO" id="GO:0010508">
    <property type="term" value="P:positive regulation of autophagy"/>
    <property type="evidence" value="ECO:0000314"/>
    <property type="project" value="UniProtKB"/>
</dbReference>
<dbReference type="GO" id="GO:2001244">
    <property type="term" value="P:positive regulation of intrinsic apoptotic signaling pathway"/>
    <property type="evidence" value="ECO:0007669"/>
    <property type="project" value="Ensembl"/>
</dbReference>
<dbReference type="GO" id="GO:0032008">
    <property type="term" value="P:positive regulation of TOR signaling"/>
    <property type="evidence" value="ECO:0000314"/>
    <property type="project" value="UniProtKB"/>
</dbReference>
<dbReference type="GO" id="GO:1904263">
    <property type="term" value="P:positive regulation of TORC1 signaling"/>
    <property type="evidence" value="ECO:0000314"/>
    <property type="project" value="UniProtKB"/>
</dbReference>
<dbReference type="GO" id="GO:0030511">
    <property type="term" value="P:positive regulation of transforming growth factor beta receptor signaling pathway"/>
    <property type="evidence" value="ECO:0000250"/>
    <property type="project" value="UniProtKB"/>
</dbReference>
<dbReference type="GO" id="GO:2000973">
    <property type="term" value="P:regulation of pro-B cell differentiation"/>
    <property type="evidence" value="ECO:0000250"/>
    <property type="project" value="UniProtKB"/>
</dbReference>
<dbReference type="GO" id="GO:0046578">
    <property type="term" value="P:regulation of Ras protein signal transduction"/>
    <property type="evidence" value="ECO:0000314"/>
    <property type="project" value="UniProtKB"/>
</dbReference>
<dbReference type="GO" id="GO:0032006">
    <property type="term" value="P:regulation of TOR signaling"/>
    <property type="evidence" value="ECO:0000250"/>
    <property type="project" value="UniProtKB"/>
</dbReference>
<dbReference type="GO" id="GO:0031929">
    <property type="term" value="P:TOR signaling"/>
    <property type="evidence" value="ECO:0007669"/>
    <property type="project" value="Ensembl"/>
</dbReference>
<dbReference type="GO" id="GO:0007179">
    <property type="term" value="P:transforming growth factor beta receptor signaling pathway"/>
    <property type="evidence" value="ECO:0007669"/>
    <property type="project" value="Ensembl"/>
</dbReference>
<dbReference type="FunFam" id="1.10.10.1730:FF:000001">
    <property type="entry name" value="Folliculin"/>
    <property type="match status" value="1"/>
</dbReference>
<dbReference type="FunFam" id="3.40.50.12430:FF:000001">
    <property type="entry name" value="Folliculin"/>
    <property type="match status" value="1"/>
</dbReference>
<dbReference type="Gene3D" id="3.40.50.12430">
    <property type="match status" value="1"/>
</dbReference>
<dbReference type="Gene3D" id="1.10.10.1730">
    <property type="entry name" value="Folliculin"/>
    <property type="match status" value="1"/>
</dbReference>
<dbReference type="InterPro" id="IPR037521">
    <property type="entry name" value="FLCN/SMCR8_DENN"/>
</dbReference>
<dbReference type="InterPro" id="IPR044886">
    <property type="entry name" value="FLCN_DENN_C_sf"/>
</dbReference>
<dbReference type="InterPro" id="IPR021713">
    <property type="entry name" value="Folliculin"/>
</dbReference>
<dbReference type="InterPro" id="IPR037520">
    <property type="entry name" value="Folliculin/SMCR8_longin"/>
</dbReference>
<dbReference type="InterPro" id="IPR032035">
    <property type="entry name" value="Folliculin_DENN"/>
</dbReference>
<dbReference type="PANTHER" id="PTHR31441:SF2">
    <property type="entry name" value="FOLLICULIN"/>
    <property type="match status" value="1"/>
</dbReference>
<dbReference type="PANTHER" id="PTHR31441">
    <property type="entry name" value="FOLLICULIN FAMILY MEMBER"/>
    <property type="match status" value="1"/>
</dbReference>
<dbReference type="Pfam" id="PF11704">
    <property type="entry name" value="Folliculin"/>
    <property type="match status" value="1"/>
</dbReference>
<dbReference type="Pfam" id="PF16692">
    <property type="entry name" value="Folliculin_C"/>
    <property type="match status" value="1"/>
</dbReference>
<dbReference type="PROSITE" id="PS51834">
    <property type="entry name" value="DENN_FLCN_SMCR8"/>
    <property type="match status" value="1"/>
</dbReference>